<name>P73_HUMAN</name>
<proteinExistence type="evidence at protein level"/>
<evidence type="ECO:0000250" key="1"/>
<evidence type="ECO:0000250" key="2">
    <source>
        <dbReference type="UniProtKB" id="Q9JJP2"/>
    </source>
</evidence>
<evidence type="ECO:0000255" key="3"/>
<evidence type="ECO:0000256" key="4">
    <source>
        <dbReference type="SAM" id="MobiDB-lite"/>
    </source>
</evidence>
<evidence type="ECO:0000269" key="5">
    <source>
    </source>
</evidence>
<evidence type="ECO:0000269" key="6">
    <source>
    </source>
</evidence>
<evidence type="ECO:0000269" key="7">
    <source>
    </source>
</evidence>
<evidence type="ECO:0000269" key="8">
    <source>
    </source>
</evidence>
<evidence type="ECO:0000269" key="9">
    <source>
    </source>
</evidence>
<evidence type="ECO:0000269" key="10">
    <source>
    </source>
</evidence>
<evidence type="ECO:0000269" key="11">
    <source>
    </source>
</evidence>
<evidence type="ECO:0000269" key="12">
    <source>
    </source>
</evidence>
<evidence type="ECO:0000269" key="13">
    <source>
    </source>
</evidence>
<evidence type="ECO:0000269" key="14">
    <source>
    </source>
</evidence>
<evidence type="ECO:0000269" key="15">
    <source>
    </source>
</evidence>
<evidence type="ECO:0000269" key="16">
    <source>
    </source>
</evidence>
<evidence type="ECO:0000269" key="17">
    <source>
    </source>
</evidence>
<evidence type="ECO:0000269" key="18">
    <source>
    </source>
</evidence>
<evidence type="ECO:0000269" key="19">
    <source>
    </source>
</evidence>
<evidence type="ECO:0000269" key="20">
    <source>
    </source>
</evidence>
<evidence type="ECO:0000269" key="21">
    <source>
    </source>
</evidence>
<evidence type="ECO:0000269" key="22">
    <source>
    </source>
</evidence>
<evidence type="ECO:0000269" key="23">
    <source>
    </source>
</evidence>
<evidence type="ECO:0000303" key="24">
    <source>
    </source>
</evidence>
<evidence type="ECO:0000303" key="25">
    <source>
    </source>
</evidence>
<evidence type="ECO:0000303" key="26">
    <source>
    </source>
</evidence>
<evidence type="ECO:0000303" key="27">
    <source>
    </source>
</evidence>
<evidence type="ECO:0000303" key="28">
    <source>
    </source>
</evidence>
<evidence type="ECO:0000303" key="29">
    <source ref="7"/>
</evidence>
<evidence type="ECO:0000305" key="30"/>
<evidence type="ECO:0007744" key="31">
    <source>
    </source>
</evidence>
<evidence type="ECO:0007829" key="32">
    <source>
        <dbReference type="PDB" id="2MPS"/>
    </source>
</evidence>
<evidence type="ECO:0007829" key="33">
    <source>
        <dbReference type="PDB" id="2XWC"/>
    </source>
</evidence>
<evidence type="ECO:0007829" key="34">
    <source>
        <dbReference type="PDB" id="3VD1"/>
    </source>
</evidence>
<evidence type="ECO:0007829" key="35">
    <source>
        <dbReference type="PDB" id="4A63"/>
    </source>
</evidence>
<evidence type="ECO:0007829" key="36">
    <source>
        <dbReference type="PDB" id="4G82"/>
    </source>
</evidence>
<evidence type="ECO:0007829" key="37">
    <source>
        <dbReference type="PDB" id="5HOB"/>
    </source>
</evidence>
<evidence type="ECO:0007829" key="38">
    <source>
        <dbReference type="PDB" id="9GNB"/>
    </source>
</evidence>
<feature type="chain" id="PRO_0000185728" description="Tumor protein p73">
    <location>
        <begin position="1"/>
        <end position="636"/>
    </location>
</feature>
<feature type="domain" description="SAM">
    <location>
        <begin position="485"/>
        <end position="551"/>
    </location>
</feature>
<feature type="region of interest" description="Transactivation" evidence="1">
    <location>
        <begin position="1"/>
        <end position="46"/>
    </location>
</feature>
<feature type="region of interest" description="Disordered" evidence="4">
    <location>
        <begin position="78"/>
        <end position="104"/>
    </location>
</feature>
<feature type="region of interest" description="DNA-binding" evidence="3">
    <location>
        <begin position="131"/>
        <end position="310"/>
    </location>
</feature>
<feature type="region of interest" description="Disordered" evidence="4">
    <location>
        <begin position="314"/>
        <end position="345"/>
    </location>
</feature>
<feature type="region of interest" description="Oligomerization" evidence="3">
    <location>
        <begin position="345"/>
        <end position="386"/>
    </location>
</feature>
<feature type="region of interest" description="Interaction with HIPK2" evidence="10">
    <location>
        <begin position="345"/>
        <end position="380"/>
    </location>
</feature>
<feature type="short sequence motif" description="PPxY motif">
    <location>
        <begin position="483"/>
        <end position="487"/>
    </location>
</feature>
<feature type="compositionally biased region" description="Polar residues" evidence="4">
    <location>
        <begin position="94"/>
        <end position="104"/>
    </location>
</feature>
<feature type="binding site" evidence="1">
    <location>
        <position position="194"/>
    </location>
    <ligand>
        <name>Zn(2+)</name>
        <dbReference type="ChEBI" id="CHEBI:29105"/>
    </ligand>
</feature>
<feature type="binding site" evidence="1">
    <location>
        <position position="197"/>
    </location>
    <ligand>
        <name>Zn(2+)</name>
        <dbReference type="ChEBI" id="CHEBI:29105"/>
    </ligand>
</feature>
<feature type="binding site" evidence="1">
    <location>
        <position position="258"/>
    </location>
    <ligand>
        <name>Zn(2+)</name>
        <dbReference type="ChEBI" id="CHEBI:29105"/>
    </ligand>
</feature>
<feature type="binding site" evidence="1">
    <location>
        <position position="262"/>
    </location>
    <ligand>
        <name>Zn(2+)</name>
        <dbReference type="ChEBI" id="CHEBI:29105"/>
    </ligand>
</feature>
<feature type="modified residue" description="Phosphothreonine; by PLK1" evidence="16 18">
    <location>
        <position position="27"/>
    </location>
</feature>
<feature type="modified residue" description="Phosphotyrosine; by SRC and HCK" evidence="15">
    <location>
        <position position="28"/>
    </location>
</feature>
<feature type="modified residue" description="Phosphotyrosine; by ABL1" evidence="6">
    <location>
        <position position="99"/>
    </location>
</feature>
<feature type="cross-link" description="Glycyl lysine isopeptide (Lys-Gly) (interchain with G-Cter in SUMO); in isoform Alpha" evidence="7">
    <location>
        <position position="627"/>
    </location>
</feature>
<feature type="cross-link" description="Glycyl lysine isopeptide (Lys-Gly) (interchain with G-Cter in SUMO2)" evidence="31">
    <location>
        <position position="627"/>
    </location>
</feature>
<feature type="splice variant" id="VSP_045082" description="In isoform 10." evidence="26">
    <location>
        <begin position="1"/>
        <end position="71"/>
    </location>
</feature>
<feature type="splice variant" id="VSP_014368" description="In isoform dN-Alpha, isoform dN-Beta, isoform dN-Gamma and isoform 11." evidence="25 26 29">
    <original>MAQSTATSPDGGTTFEHLWSSLEPDSTYFDLPQSSRGNNEVVGGTDSSMDVFHLEGMTTSVM</original>
    <variation>MLYVGDPARHLAT</variation>
    <location>
        <begin position="1"/>
        <end position="62"/>
    </location>
</feature>
<feature type="splice variant" id="VSP_053809" description="In isoform 11." evidence="26">
    <location>
        <begin position="400"/>
        <end position="636"/>
    </location>
</feature>
<feature type="splice variant" id="VSP_053810" description="In isoform 12." evidence="30">
    <original>SHLQPPSYGPVLSPMNKVHGGMNKLPSVNQLVGQPPPHSSAATPNLGPVGPGMLNNHGHAVPANGEMSSSHSAQSMVSGSHCTPPPPYHADPSLVSFLTGLGCPNCIEYFTSQGLQSIYHLQNLTIE</original>
    <variation>PRDAQQPWPRSASQRRDEQQPQRPVHGLGVPLHSATPLPRRPQPRQ</variation>
    <location>
        <begin position="400"/>
        <end position="526"/>
    </location>
</feature>
<feature type="splice variant" id="VSP_006546" description="In isoform Zeta." evidence="24">
    <location>
        <begin position="400"/>
        <end position="495"/>
    </location>
</feature>
<feature type="splice variant" id="VSP_006540" description="In isoform Gamma and isoform dN-Gamma." evidence="25 28">
    <original>SHLQPPSYGPVLSPMNKVHGGMNKLPSVNQLVGQPPPHSSAATPNLGPVGPGMLNNHGHAVPANGEMSSSHSAQSMV</original>
    <variation>PRDAQQPWPRSASQQRRDEQQPQRPVHGLGVPLHSATPLPRRPQPRQFFNRIGVSKLHRVFHLPRVTEHLPPAEPDH</variation>
    <location>
        <begin position="400"/>
        <end position="476"/>
    </location>
</feature>
<feature type="splice variant" id="VSP_006544" description="In isoform Epsilon." evidence="24">
    <original>SHLQPPSYGPVLSPMNKVHGGMNKLPSVNQLVGQPPPHSSAATPNL</original>
    <variation>PRDAQQPWPRSASQQRRDEQQPQRPVHGLGVPLHSATPLPRRPQPR</variation>
    <location>
        <begin position="400"/>
        <end position="445"/>
    </location>
</feature>
<feature type="splice variant" id="VSP_006542" description="In isoform Delta." evidence="28">
    <original>SHLQ</original>
    <variation>TWGP</variation>
    <location>
        <begin position="400"/>
        <end position="403"/>
    </location>
</feature>
<feature type="splice variant" id="VSP_006543" description="In isoform Delta." evidence="28">
    <location>
        <begin position="404"/>
        <end position="636"/>
    </location>
</feature>
<feature type="splice variant" id="VSP_006545" description="In isoform Epsilon." evidence="24">
    <location>
        <begin position="446"/>
        <end position="526"/>
    </location>
</feature>
<feature type="splice variant" id="VSP_006541" description="In isoform Gamma and isoform dN-Gamma." evidence="25 28">
    <location>
        <begin position="477"/>
        <end position="636"/>
    </location>
</feature>
<feature type="splice variant" id="VSP_006539" description="In isoform Beta and isoform dN-Beta." evidence="25 27 29">
    <original>SFLTGLGCPNCIEYFTSQGLQSIYHLQNLTIEDLGALKIPEQYRMTIWRGLQDLKQGHDYSTAQQLLRSSNAATISIGGSGELQRQRVMEAVHFRVRHTITIPNRGGPGGGPDEWADFGFDLPDCKARKQPIKEEFTEAEIH</original>
    <variation>RTWGP</variation>
    <location>
        <begin position="495"/>
        <end position="636"/>
    </location>
</feature>
<feature type="sequence variant" id="VAR_086144" description="In CILD47." evidence="23">
    <location>
        <begin position="205"/>
        <end position="636"/>
    </location>
</feature>
<feature type="sequence variant" id="VAR_086145" description="In CILD47." evidence="23">
    <location>
        <begin position="332"/>
        <end position="636"/>
    </location>
</feature>
<feature type="mutagenesis site" description="Impaired phosphorylation." evidence="16">
    <original>T</original>
    <variation>A</variation>
    <location>
        <position position="27"/>
    </location>
</feature>
<feature type="mutagenesis site" description="Impaired phosphorylation of isoform beta by ABL1." evidence="6">
    <original>Y</original>
    <variation>F</variation>
    <location>
        <position position="99"/>
    </location>
</feature>
<feature type="mutagenesis site" description="Loss of interaction with WWOX." evidence="12">
    <original>Y</original>
    <variation>A</variation>
    <location>
        <position position="487"/>
    </location>
</feature>
<feature type="mutagenesis site" description="Strongly diminishes sumoylation but does not affect transcriptional activity." evidence="7">
    <original>K</original>
    <variation>R</variation>
    <location>
        <position position="627"/>
    </location>
</feature>
<feature type="helix" evidence="32">
    <location>
        <begin position="15"/>
        <end position="20"/>
    </location>
</feature>
<feature type="turn" evidence="33">
    <location>
        <begin position="123"/>
        <end position="126"/>
    </location>
</feature>
<feature type="strand" evidence="33">
    <location>
        <begin position="128"/>
        <end position="130"/>
    </location>
</feature>
<feature type="strand" evidence="36">
    <location>
        <begin position="136"/>
        <end position="138"/>
    </location>
</feature>
<feature type="strand" evidence="33">
    <location>
        <begin position="141"/>
        <end position="145"/>
    </location>
</feature>
<feature type="turn" evidence="33">
    <location>
        <begin position="146"/>
        <end position="149"/>
    </location>
</feature>
<feature type="strand" evidence="33">
    <location>
        <begin position="150"/>
        <end position="153"/>
    </location>
</feature>
<feature type="strand" evidence="33">
    <location>
        <begin position="157"/>
        <end position="164"/>
    </location>
</feature>
<feature type="strand" evidence="33">
    <location>
        <begin position="174"/>
        <end position="181"/>
    </location>
</feature>
<feature type="turn" evidence="33">
    <location>
        <begin position="184"/>
        <end position="188"/>
    </location>
</feature>
<feature type="helix" evidence="33">
    <location>
        <begin position="195"/>
        <end position="199"/>
    </location>
</feature>
<feature type="turn" evidence="33">
    <location>
        <begin position="202"/>
        <end position="206"/>
    </location>
</feature>
<feature type="strand" evidence="33">
    <location>
        <begin position="214"/>
        <end position="219"/>
    </location>
</feature>
<feature type="strand" evidence="33">
    <location>
        <begin position="224"/>
        <end position="227"/>
    </location>
</feature>
<feature type="turn" evidence="33">
    <location>
        <begin position="229"/>
        <end position="231"/>
    </location>
</feature>
<feature type="strand" evidence="33">
    <location>
        <begin position="234"/>
        <end position="239"/>
    </location>
</feature>
<feature type="strand" evidence="33">
    <location>
        <begin position="250"/>
        <end position="256"/>
    </location>
</feature>
<feature type="helix" evidence="33">
    <location>
        <begin position="260"/>
        <end position="262"/>
    </location>
</feature>
<feature type="turn" evidence="35">
    <location>
        <begin position="263"/>
        <end position="268"/>
    </location>
</feature>
<feature type="strand" evidence="33">
    <location>
        <begin position="271"/>
        <end position="278"/>
    </location>
</feature>
<feature type="strand" evidence="34">
    <location>
        <begin position="280"/>
        <end position="282"/>
    </location>
</feature>
<feature type="strand" evidence="33">
    <location>
        <begin position="284"/>
        <end position="294"/>
    </location>
</feature>
<feature type="helix" evidence="33">
    <location>
        <begin position="298"/>
        <end position="311"/>
    </location>
</feature>
<feature type="strand" evidence="37">
    <location>
        <begin position="354"/>
        <end position="361"/>
    </location>
</feature>
<feature type="helix" evidence="37">
    <location>
        <begin position="362"/>
        <end position="377"/>
    </location>
</feature>
<feature type="helix" evidence="37">
    <location>
        <begin position="378"/>
        <end position="380"/>
    </location>
</feature>
<feature type="helix" evidence="37">
    <location>
        <begin position="383"/>
        <end position="394"/>
    </location>
</feature>
<feature type="helix" evidence="38">
    <location>
        <begin position="491"/>
        <end position="500"/>
    </location>
</feature>
<feature type="helix" evidence="38">
    <location>
        <begin position="503"/>
        <end position="505"/>
    </location>
</feature>
<feature type="helix" evidence="38">
    <location>
        <begin position="506"/>
        <end position="510"/>
    </location>
</feature>
<feature type="turn" evidence="38">
    <location>
        <begin position="511"/>
        <end position="513"/>
    </location>
</feature>
<feature type="helix" evidence="38">
    <location>
        <begin position="517"/>
        <end position="520"/>
    </location>
</feature>
<feature type="helix" evidence="38">
    <location>
        <begin position="525"/>
        <end position="530"/>
    </location>
</feature>
<feature type="helix" evidence="38">
    <location>
        <begin position="535"/>
        <end position="547"/>
    </location>
</feature>
<accession>O15350</accession>
<accession>B7Z7J4</accession>
<accession>B7Z8Z1</accession>
<accession>B7Z9C1</accession>
<accession>C9J521</accession>
<accession>O15351</accession>
<accession>Q17RN8</accession>
<accession>Q5TBV5</accession>
<accession>Q5TBV6</accession>
<accession>Q8NHW9</accession>
<accession>Q8TDY5</accession>
<accession>Q8TDY6</accession>
<accession>Q9NTK8</accession>
<gene>
    <name type="primary">TP73</name>
    <name type="synonym">P73</name>
</gene>
<sequence>MAQSTATSPDGGTTFEHLWSSLEPDSTYFDLPQSSRGNNEVVGGTDSSMDVFHLEGMTTSVMAQFNLLSSTMDQMSSRAASASPYTPEHAASVPTHSPYAQPSSTFDTMSPAPVIPSNTDYPGPHHFEVTFQQSSTAKSATWTYSPLLKKLYCQIAKTCPIQIKVSTPPPPGTAIRAMPVYKKAEHVTDVVKRCPNHELGRDFNEGQSAPASHLIRVEGNNLSQYVDDPVTGRQSVVVPYEPPQVGTEFTTILYNFMCNSSCVGGMNRRPILIIITLEMRDGQVLGRRSFEGRICACPGRDRKADEDHYREQQALNESSAKNGAASKRAFKQSPPAVPALGAGVKKRRHGDEDTYYLQVRGRENFEILMKLKESLELMELVPQPLVDSYRQQQQLLQRPSHLQPPSYGPVLSPMNKVHGGMNKLPSVNQLVGQPPPHSSAATPNLGPVGPGMLNNHGHAVPANGEMSSSHSAQSMVSGSHCTPPPPYHADPSLVSFLTGLGCPNCIEYFTSQGLQSIYHLQNLTIEDLGALKIPEQYRMTIWRGLQDLKQGHDYSTAQQLLRSSNAATISIGGSGELQRQRVMEAVHFRVRHTITIPNRGGPGGGPDEWADFGFDLPDCKARKQPIKEEFTEAEIH</sequence>
<keyword id="KW-0002">3D-structure</keyword>
<keyword id="KW-0010">Activator</keyword>
<keyword id="KW-0877">Alternative promoter usage</keyword>
<keyword id="KW-0025">Alternative splicing</keyword>
<keyword id="KW-0053">Apoptosis</keyword>
<keyword id="KW-0131">Cell cycle</keyword>
<keyword id="KW-1186">Ciliopathy</keyword>
<keyword id="KW-0963">Cytoplasm</keyword>
<keyword id="KW-0225">Disease variant</keyword>
<keyword id="KW-0238">DNA-binding</keyword>
<keyword id="KW-0945">Host-virus interaction</keyword>
<keyword id="KW-1017">Isopeptide bond</keyword>
<keyword id="KW-0451">Lissencephaly</keyword>
<keyword id="KW-0479">Metal-binding</keyword>
<keyword id="KW-0539">Nucleus</keyword>
<keyword id="KW-0597">Phosphoprotein</keyword>
<keyword id="KW-0990">Primary ciliary dyskinesia</keyword>
<keyword id="KW-1267">Proteomics identification</keyword>
<keyword id="KW-1185">Reference proteome</keyword>
<keyword id="KW-0804">Transcription</keyword>
<keyword id="KW-0805">Transcription regulation</keyword>
<keyword id="KW-0043">Tumor suppressor</keyword>
<keyword id="KW-0832">Ubl conjugation</keyword>
<keyword id="KW-0862">Zinc</keyword>
<protein>
    <recommendedName>
        <fullName>Tumor protein p73</fullName>
    </recommendedName>
    <alternativeName>
        <fullName>p53-like transcription factor</fullName>
    </alternativeName>
    <alternativeName>
        <fullName>p53-related protein</fullName>
    </alternativeName>
</protein>
<organism>
    <name type="scientific">Homo sapiens</name>
    <name type="common">Human</name>
    <dbReference type="NCBI Taxonomy" id="9606"/>
    <lineage>
        <taxon>Eukaryota</taxon>
        <taxon>Metazoa</taxon>
        <taxon>Chordata</taxon>
        <taxon>Craniata</taxon>
        <taxon>Vertebrata</taxon>
        <taxon>Euteleostomi</taxon>
        <taxon>Mammalia</taxon>
        <taxon>Eutheria</taxon>
        <taxon>Euarchontoglires</taxon>
        <taxon>Primates</taxon>
        <taxon>Haplorrhini</taxon>
        <taxon>Catarrhini</taxon>
        <taxon>Hominidae</taxon>
        <taxon>Homo</taxon>
    </lineage>
</organism>
<comment type="function">
    <text evidence="2 5 9 16 23">Participates in the apoptotic response to DNA damage. Isoforms containing the transactivation domain are pro-apoptotic, isoforms lacking the domain are anti-apoptotic and block the function of p53 and transactivating p73 isoforms. May be a tumor suppressor protein. Is an activator of FOXJ1 expression (By similarity). It is an essential factor for the positive regulation of lung ciliated cell differentiation (PubMed:34077761).</text>
</comment>
<comment type="cofactor">
    <cofactor evidence="1">
        <name>Zn(2+)</name>
        <dbReference type="ChEBI" id="CHEBI:29105"/>
    </cofactor>
    <text evidence="1">Binds 1 zinc ion per subunit.</text>
</comment>
<comment type="subunit">
    <text evidence="6 8 10 11 12 13 15 17 19 22">Found in a complex with p53/TP53 and CABLES1. The C-terminal oligomerization domain binds to the ABL1 tyrosine kinase SH3 domain. Interacts with HECW2. Isoform Beta interacts homotypically and with p53/TP53, whereas isoform Alpha does not. Isoform Gamma interacts homotypically and with all p73 isoforms. Isoform Delta interacts with isoform Gamma, isoform Alpha, and homotypically. Isoforms Alpha and Beta interact with HIPK2. Isoform Alpha interacts with RANBP9. Isoform Beta interacts with WWOX. Interacts (via SAM domain) with FBXO45 (via B30.2/SPRY domain). Interacts with YAP1 (phosphorylated form). Interacts with HCK (via SH3 domain); this inhibits TP73 activity and degradation. Interacts (via SAM domain) with NQO1; this interaction is NADH-dependent, stabilizes TP73 in response to oxidative stress and protects it from ubiquitin-independent degradation by the 20S proteasome.</text>
</comment>
<comment type="subunit">
    <text evidence="21">(Microbial infection) Interacts with Epstein-Barr virus protein EBNA6; this interaction inhibits TP73-mediated apoptotic pathway.</text>
</comment>
<comment type="interaction">
    <interactant intactId="EBI-389606">
        <id>O15350</id>
    </interactant>
    <interactant intactId="EBI-448680">
        <id>O14965</id>
        <label>AURKA</label>
    </interactant>
    <organismsDiffer>false</organismsDiffer>
    <experiments>11</experiments>
</comment>
<comment type="interaction">
    <interactant intactId="EBI-389606">
        <id>O15350</id>
    </interactant>
    <interactant intactId="EBI-447295">
        <id>Q09472</id>
        <label>EP300</label>
    </interactant>
    <organismsDiffer>false</organismsDiffer>
    <experiments>2</experiments>
</comment>
<comment type="interaction">
    <interactant intactId="EBI-389606">
        <id>O15350</id>
    </interactant>
    <interactant intactId="EBI-354932">
        <id>P38646</id>
        <label>HSPA9</label>
    </interactant>
    <organismsDiffer>false</organismsDiffer>
    <experiments>11</experiments>
</comment>
<comment type="interaction">
    <interactant intactId="EBI-389606">
        <id>O15350</id>
    </interactant>
    <interactant intactId="EBI-1564678">
        <id>Q96J02</id>
        <label>ITCH</label>
    </interactant>
    <organismsDiffer>false</organismsDiffer>
    <experiments>5</experiments>
</comment>
<comment type="interaction">
    <interactant intactId="EBI-389606">
        <id>O15350</id>
    </interactant>
    <interactant intactId="EBI-389668">
        <id>Q00987</id>
        <label>MDM2</label>
    </interactant>
    <organismsDiffer>false</organismsDiffer>
    <experiments>4</experiments>
</comment>
<comment type="interaction">
    <interactant intactId="EBI-389606">
        <id>O15350</id>
    </interactant>
    <interactant intactId="EBI-726944">
        <id>P46934</id>
        <label>NEDD4</label>
    </interactant>
    <organismsDiffer>false</organismsDiffer>
    <experiments>2</experiments>
</comment>
<comment type="interaction">
    <interactant intactId="EBI-389606">
        <id>O15350</id>
    </interactant>
    <interactant intactId="EBI-15726984">
        <id>P54278-1</id>
        <label>PMS2</label>
    </interactant>
    <organismsDiffer>false</organismsDiffer>
    <experiments>3</experiments>
</comment>
<comment type="interaction">
    <interactant intactId="EBI-389606">
        <id>O15350</id>
    </interactant>
    <interactant intactId="EBI-2129982">
        <id>Q7Z419</id>
        <label>RNF144B</label>
    </interactant>
    <organismsDiffer>false</organismsDiffer>
    <experiments>2</experiments>
</comment>
<comment type="interaction">
    <interactant intactId="EBI-389606">
        <id>O15350</id>
    </interactant>
    <interactant intactId="EBI-976402">
        <id>Q13950</id>
        <label>RUNX2</label>
    </interactant>
    <organismsDiffer>false</organismsDiffer>
    <experiments>3</experiments>
</comment>
<comment type="interaction">
    <interactant intactId="EBI-389606">
        <id>O15350</id>
    </interactant>
    <interactant intactId="EBI-1802965">
        <id>Q96EB6</id>
        <label>SIRT1</label>
    </interactant>
    <organismsDiffer>false</organismsDiffer>
    <experiments>4</experiments>
</comment>
<comment type="interaction">
    <interactant intactId="EBI-389606">
        <id>O15350</id>
    </interactant>
    <interactant intactId="EBI-77642">
        <id>Q13625</id>
        <label>TP53BP2</label>
    </interactant>
    <organismsDiffer>false</organismsDiffer>
    <experiments>2</experiments>
</comment>
<comment type="interaction">
    <interactant intactId="EBI-389606">
        <id>O15350</id>
    </interactant>
    <interactant intactId="EBI-2337775">
        <id>Q9H3D4</id>
        <label>TP63</label>
    </interactant>
    <organismsDiffer>false</organismsDiffer>
    <experiments>4</experiments>
</comment>
<comment type="interaction">
    <interactant intactId="EBI-389606">
        <id>O15350</id>
    </interactant>
    <interactant intactId="EBI-389606">
        <id>O15350</id>
        <label>TP73</label>
    </interactant>
    <organismsDiffer>false</organismsDiffer>
    <experiments>10</experiments>
</comment>
<comment type="interaction">
    <interactant intactId="EBI-389606">
        <id>O15350</id>
    </interactant>
    <interactant intactId="EBI-4320739">
        <id>Q9NZC7</id>
        <label>WWOX</label>
    </interactant>
    <organismsDiffer>false</organismsDiffer>
    <experiments>4</experiments>
</comment>
<comment type="interaction">
    <interactant intactId="EBI-389606">
        <id>O15350</id>
    </interactant>
    <interactant intactId="EBI-1044059">
        <id>P46937</id>
        <label>YAP1</label>
    </interactant>
    <organismsDiffer>false</organismsDiffer>
    <experiments>5</experiments>
</comment>
<comment type="interaction">
    <interactant intactId="EBI-389606">
        <id>O15350</id>
    </interactant>
    <interactant intactId="EBI-604411">
        <id>Q9ESJ1</id>
        <label>Cables1</label>
    </interactant>
    <organismsDiffer>true</organismsDiffer>
    <experiments>3</experiments>
</comment>
<comment type="interaction">
    <interactant intactId="EBI-389619">
        <id>O15350-1</id>
    </interactant>
    <interactant intactId="EBI-2339650">
        <id>Q9UKL3</id>
        <label>CASP8AP2</label>
    </interactant>
    <organismsDiffer>false</organismsDiffer>
    <experiments>2</experiments>
</comment>
<comment type="interaction">
    <interactant intactId="EBI-389619">
        <id>O15350-1</id>
    </interactant>
    <interactant intactId="EBI-1564678">
        <id>Q96J02</id>
        <label>ITCH</label>
    </interactant>
    <organismsDiffer>false</organismsDiffer>
    <experiments>5</experiments>
</comment>
<comment type="interaction">
    <interactant intactId="EBI-389619">
        <id>O15350-1</id>
    </interactant>
    <interactant intactId="EBI-4320739">
        <id>Q9NZC7</id>
        <label>WWOX</label>
    </interactant>
    <organismsDiffer>false</organismsDiffer>
    <experiments>3</experiments>
</comment>
<comment type="interaction">
    <interactant intactId="EBI-389619">
        <id>O15350-1</id>
    </interactant>
    <interactant intactId="EBI-1044059">
        <id>P46937</id>
        <label>YAP1</label>
    </interactant>
    <organismsDiffer>false</organismsDiffer>
    <experiments>7</experiments>
</comment>
<comment type="interaction">
    <interactant intactId="EBI-389619">
        <id>O15350-1</id>
    </interactant>
    <interactant intactId="EBI-1177242">
        <id>P03126</id>
        <label>E6</label>
    </interactant>
    <organismsDiffer>true</organismsDiffer>
    <experiments>2</experiments>
</comment>
<comment type="interaction">
    <interactant intactId="EBI-389623">
        <id>O15350-2</id>
    </interactant>
    <interactant intactId="EBI-4320739">
        <id>Q9NZC7</id>
        <label>WWOX</label>
    </interactant>
    <organismsDiffer>false</organismsDiffer>
    <experiments>5</experiments>
</comment>
<comment type="interaction">
    <interactant intactId="EBI-5651259">
        <id>O15350-8</id>
    </interactant>
    <interactant intactId="EBI-1564678">
        <id>Q96J02</id>
        <label>ITCH</label>
    </interactant>
    <organismsDiffer>false</organismsDiffer>
    <experiments>2</experiments>
</comment>
<comment type="interaction">
    <interactant intactId="EBI-5651259">
        <id>O15350-8</id>
    </interactant>
    <interactant intactId="EBI-2129982">
        <id>Q7Z419</id>
        <label>RNF144B</label>
    </interactant>
    <organismsDiffer>false</organismsDiffer>
    <experiments>2</experiments>
</comment>
<comment type="subcellular location">
    <subcellularLocation>
        <location evidence="21">Nucleus</location>
    </subcellularLocation>
    <subcellularLocation>
        <location>Cytoplasm</location>
    </subcellularLocation>
    <text>Accumulates in the nucleus in response to DNA damage.</text>
</comment>
<comment type="alternative products">
    <event type="alternative promoter"/>
    <event type="alternative splicing"/>
    <isoform>
        <id>O15350-1</id>
        <name>Alpha</name>
        <sequence type="displayed"/>
    </isoform>
    <isoform>
        <id>O15350-2</id>
        <name>Beta</name>
        <sequence type="described" ref="VSP_006539"/>
    </isoform>
    <isoform>
        <id>O15350-3</id>
        <name>Gamma</name>
        <sequence type="described" ref="VSP_006540 VSP_006541"/>
    </isoform>
    <isoform>
        <id>O15350-4</id>
        <name>Delta</name>
        <sequence type="described" ref="VSP_006542 VSP_006543"/>
    </isoform>
    <isoform>
        <id>O15350-5</id>
        <name>Epsilon</name>
        <sequence type="described" ref="VSP_006544 VSP_006545"/>
    </isoform>
    <isoform>
        <id>O15350-6</id>
        <name>Zeta</name>
        <sequence type="described" ref="VSP_006546"/>
    </isoform>
    <isoform>
        <id>O15350-8</id>
        <name>dN-Alpha</name>
        <sequence type="described" ref="VSP_014368"/>
    </isoform>
    <isoform>
        <id>O15350-9</id>
        <name>dN-Beta</name>
        <sequence type="described" ref="VSP_014368 VSP_006539"/>
    </isoform>
    <isoform>
        <id>O15350-10</id>
        <name>dN-Gamma</name>
        <sequence type="described" ref="VSP_014368 VSP_006540 VSP_006541"/>
    </isoform>
    <isoform>
        <id>O15350-11</id>
        <name>10</name>
        <sequence type="described" ref="VSP_045082"/>
    </isoform>
    <isoform>
        <id>O15350-12</id>
        <name>11</name>
        <sequence type="described" ref="VSP_014368 VSP_053809"/>
    </isoform>
    <isoform>
        <id>O15350-13</id>
        <name>12</name>
        <sequence type="described" ref="VSP_053810"/>
    </isoform>
</comment>
<comment type="tissue specificity">
    <text evidence="9 14 23">Expressed in striatal neurons of patients with Huntington disease (at protein level). Brain, kidney, placenta, colon, heart, liver, spleen, skeletal muscle, prostate, thymus and pancreas. Highly expressed in fetal tissue. Expressed in the respiratory epithelium (PubMed:34077761).</text>
</comment>
<comment type="induction">
    <text evidence="9">Not induced by DNA damage. Isoforms lacking the transactivation domain block gene induction.</text>
</comment>
<comment type="domain">
    <text evidence="12">Possesses an acidic transactivation domain, a central DNA binding domain and a C-terminal oligomerization domain that binds to the ABL1 tyrosine kinase SH3 domain.</text>
</comment>
<comment type="domain">
    <text evidence="12">The PPxY motif mediates interaction with WWOX.</text>
</comment>
<comment type="PTM">
    <text evidence="7">Isoform alpha (but not isoform beta) is sumoylated on Lys-627, which potentiates proteasomal degradation but does not affect transcriptional activity. Phosphorylation by PLK1 and PLK3 inhibits the transcription regulator activity and pro-apoptotic function.</text>
</comment>
<comment type="PTM">
    <text>Higher levels of phosphorylation seen in the brain from patients with Huntington disease.</text>
</comment>
<comment type="PTM">
    <text evidence="19 20">Polyubiquitinated by RCHY1/PIRH2; leading to its degradation by the proteasome.</text>
</comment>
<comment type="disease" evidence="23">
    <disease id="DI-06185">
        <name>Ciliary dyskinesia, primary, 47, and lissencephaly</name>
        <acronym>CILD47</acronym>
        <description>A form of primary ciliary dyskinesia, a disorder characterized by abnormalities of motile cilia. Respiratory infections leading to chronic inflammation and bronchiectasis are recurrent, due to defects in the respiratory cilia. CILD47 is an autosomal recessive form characterized by onset soon after birth or in early childhood. Affected individuals also have neurologic features, such as impaired intellectual development and central hypotonia, associated with structural brain abnormalities, most notably lissencephaly and thin or absent corpus callosum. No situs abnormalities have been observed.</description>
        <dbReference type="MIM" id="619466"/>
    </disease>
    <text>The disease is caused by variants affecting the gene represented in this entry.</text>
</comment>
<comment type="miscellaneous">
    <text>Maps to a chromosome region frequently mutated in diverse cell lines of human cancer. Appears not to be frequently mutated in human cancers, in contrast to p53/TP53. Hemizygosity is observed in neuroblastoma and oligodendroglioma.</text>
</comment>
<comment type="miscellaneous">
    <text>Activated and stabilized by interaction with RANBP9.</text>
</comment>
<comment type="miscellaneous">
    <molecule>Isoform Beta</molecule>
    <text evidence="30">Produced by alternative splicing of isoform Alpha.</text>
</comment>
<comment type="miscellaneous">
    <molecule>Isoform Gamma</molecule>
    <text evidence="30">Produced by alternative splicing of isoform Alpha. The splicing of exon 11 results in a frameshift from the original reading frame.</text>
</comment>
<comment type="miscellaneous">
    <molecule>Isoform Delta</molecule>
    <text evidence="30">Produced by alternative splicing of isoform Alpha.</text>
</comment>
<comment type="miscellaneous">
    <molecule>Isoform Epsilon</molecule>
    <text evidence="30">Produced by alternative splicing of isoform Alpha. The splicing of exon 11 results in a frameshift from the original reading frame. The splicing of exon 13 reverts the reading frame to the sequence of isoform Alpha.</text>
</comment>
<comment type="miscellaneous">
    <molecule>Isoform Zeta</molecule>
    <text evidence="30">Produced by alternative splicing of isoform Alpha.</text>
</comment>
<comment type="miscellaneous">
    <molecule>Isoform dN-Alpha</molecule>
    <text evidence="30">Produced by alternative promoter usage.</text>
</comment>
<comment type="miscellaneous">
    <molecule>Isoform dN-Beta</molecule>
    <text evidence="30">Produced by alternative splicing of isoform dN-Alpha.</text>
</comment>
<comment type="miscellaneous">
    <molecule>Isoform dN-Gamma</molecule>
    <text evidence="30">Produced by alternative splicing of isoform dN-Alpha.</text>
</comment>
<comment type="similarity">
    <text evidence="30">Belongs to the p53 family.</text>
</comment>
<reference key="1">
    <citation type="journal article" date="1997" name="Cell">
        <title>Monoallelically expressed gene related to p53 at 1p36, a region frequently deleted in neuroblastoma and other human cancers.</title>
        <authorList>
            <person name="Kaghad M."/>
            <person name="Bonnet H."/>
            <person name="Yang A."/>
            <person name="Creancier L."/>
            <person name="Biscan J.-C."/>
            <person name="Valent A."/>
            <person name="Minty A."/>
            <person name="Chalon P."/>
            <person name="Lelias J.-M."/>
            <person name="Dumont X."/>
            <person name="Ferrara P."/>
            <person name="McKeon F."/>
            <person name="Caput D."/>
        </authorList>
    </citation>
    <scope>NUCLEOTIDE SEQUENCE [MRNA] (ISOFORMS ALPHA AND BETA)</scope>
    <source>
        <tissue>Colon</tissue>
    </source>
</reference>
<reference key="2">
    <citation type="journal article" date="1998" name="Genomics">
        <title>Genomic organization and mutation analysis of p73 in oligodendrogliomas with chromosome 1 p-arm deletions.</title>
        <authorList>
            <person name="Mai M."/>
            <person name="Huang H."/>
            <person name="Reed C."/>
            <person name="Qian C."/>
            <person name="Smith J.S."/>
            <person name="Alderete B."/>
            <person name="Jenkins R."/>
            <person name="Smith D.I."/>
            <person name="Liu W."/>
        </authorList>
    </citation>
    <scope>NUCLEOTIDE SEQUENCE [GENOMIC DNA] (ISOFORM ALPHA)</scope>
</reference>
<reference key="3">
    <citation type="journal article" date="1998" name="J. Exp. Med.">
        <title>Two new p73 splice variants, gamma and delta, with different transcriptional activity.</title>
        <authorList>
            <person name="De Laurenzi V."/>
            <person name="Costanzo A."/>
            <person name="Barcaroli D."/>
            <person name="Terrinoni A."/>
            <person name="Falco M."/>
            <person name="Annicchiarico-Petruzzelli M."/>
            <person name="Levrero M."/>
            <person name="Melino G."/>
        </authorList>
    </citation>
    <scope>NUCLEOTIDE SEQUENCE [MRNA] (ISOFORMS GAMMA AND DELTA)</scope>
    <source>
        <tissue>Neuroblastoma</tissue>
    </source>
</reference>
<reference key="4">
    <citation type="journal article" date="1999" name="Cell Death Differ.">
        <title>Additional complexity in p73: induction by mitogens in lymphoid cells and identification of two new splicing variants epsilon and zeta.</title>
        <authorList>
            <person name="De Laurenzi V."/>
            <person name="Catani M.V."/>
            <person name="Terrinoni A."/>
            <person name="Corazzari M."/>
            <person name="Melino G."/>
            <person name="Costanzo A."/>
            <person name="Levrero M."/>
            <person name="Knight R.A."/>
        </authorList>
    </citation>
    <scope>NUCLEOTIDE SEQUENCE [MRNA] (ISOFORMS EPSILON AND ZETA)</scope>
    <source>
        <tissue>Hepatoma</tissue>
        <tissue>Lymphocyte</tissue>
        <tissue>Mammary cancer</tissue>
        <tissue>Skin</tissue>
    </source>
</reference>
<reference key="5">
    <citation type="journal article" date="1999" name="Oncogene">
        <title>Mutational analysis of p73 and p53 in human cancer cell lines.</title>
        <authorList>
            <person name="Yoshikawa H."/>
            <person name="Nagashima M."/>
            <person name="Khan M.A."/>
            <person name="McMenamin M.G."/>
            <person name="Hagiwara K."/>
            <person name="Harris C.C."/>
        </authorList>
    </citation>
    <scope>NUCLEOTIDE SEQUENCE [GENOMIC DNA] (ISOFORM ALPHA)</scope>
</reference>
<reference key="6">
    <citation type="journal article" date="2001" name="Cell Death Differ.">
        <title>Human DeltaNp73 regulates a dominant negative feedback loop for TAp73 and p53.</title>
        <authorList>
            <person name="Grob T.J."/>
            <person name="Novak U."/>
            <person name="Maisse C."/>
            <person name="Barcaroli D."/>
            <person name="Luthi A.U."/>
            <person name="Pirnia F."/>
            <person name="Hugli B."/>
            <person name="Graber H.U."/>
            <person name="De Laurenzi V."/>
            <person name="Fey M.F."/>
            <person name="Melino G."/>
            <person name="Tobler A."/>
        </authorList>
    </citation>
    <scope>NUCLEOTIDE SEQUENCE [MRNA] (ISOFORMS DN-ALPHA; DN-BETA AND DN-GAMMA)</scope>
    <scope>FUNCTION</scope>
    <scope>TISSUE SPECIFICITY</scope>
    <scope>INDUCTION</scope>
</reference>
<reference key="7">
    <citation type="submission" date="2001-01" db="EMBL/GenBank/DDBJ databases">
        <title>Identification of the p73-specific target sequence present in the deltaNp73 proper promoter.</title>
        <authorList>
            <person name="Nakagawa T."/>
            <person name="Takahashi M."/>
            <person name="Ozaki T."/>
            <person name="Watanabe K."/>
            <person name="Nakagawara A."/>
        </authorList>
    </citation>
    <scope>NUCLEOTIDE SEQUENCE [MRNA] (ISOFORMS DN-ALPHA AND DN-BETA)</scope>
</reference>
<reference key="8">
    <citation type="journal article" date="2004" name="Nat. Genet.">
        <title>Complete sequencing and characterization of 21,243 full-length human cDNAs.</title>
        <authorList>
            <person name="Ota T."/>
            <person name="Suzuki Y."/>
            <person name="Nishikawa T."/>
            <person name="Otsuki T."/>
            <person name="Sugiyama T."/>
            <person name="Irie R."/>
            <person name="Wakamatsu A."/>
            <person name="Hayashi K."/>
            <person name="Sato H."/>
            <person name="Nagai K."/>
            <person name="Kimura K."/>
            <person name="Makita H."/>
            <person name="Sekine M."/>
            <person name="Obayashi M."/>
            <person name="Nishi T."/>
            <person name="Shibahara T."/>
            <person name="Tanaka T."/>
            <person name="Ishii S."/>
            <person name="Yamamoto J."/>
            <person name="Saito K."/>
            <person name="Kawai Y."/>
            <person name="Isono Y."/>
            <person name="Nakamura Y."/>
            <person name="Nagahari K."/>
            <person name="Murakami K."/>
            <person name="Yasuda T."/>
            <person name="Iwayanagi T."/>
            <person name="Wagatsuma M."/>
            <person name="Shiratori A."/>
            <person name="Sudo H."/>
            <person name="Hosoiri T."/>
            <person name="Kaku Y."/>
            <person name="Kodaira H."/>
            <person name="Kondo H."/>
            <person name="Sugawara M."/>
            <person name="Takahashi M."/>
            <person name="Kanda K."/>
            <person name="Yokoi T."/>
            <person name="Furuya T."/>
            <person name="Kikkawa E."/>
            <person name="Omura Y."/>
            <person name="Abe K."/>
            <person name="Kamihara K."/>
            <person name="Katsuta N."/>
            <person name="Sato K."/>
            <person name="Tanikawa M."/>
            <person name="Yamazaki M."/>
            <person name="Ninomiya K."/>
            <person name="Ishibashi T."/>
            <person name="Yamashita H."/>
            <person name="Murakawa K."/>
            <person name="Fujimori K."/>
            <person name="Tanai H."/>
            <person name="Kimata M."/>
            <person name="Watanabe M."/>
            <person name="Hiraoka S."/>
            <person name="Chiba Y."/>
            <person name="Ishida S."/>
            <person name="Ono Y."/>
            <person name="Takiguchi S."/>
            <person name="Watanabe S."/>
            <person name="Yosida M."/>
            <person name="Hotuta T."/>
            <person name="Kusano J."/>
            <person name="Kanehori K."/>
            <person name="Takahashi-Fujii A."/>
            <person name="Hara H."/>
            <person name="Tanase T.-O."/>
            <person name="Nomura Y."/>
            <person name="Togiya S."/>
            <person name="Komai F."/>
            <person name="Hara R."/>
            <person name="Takeuchi K."/>
            <person name="Arita M."/>
            <person name="Imose N."/>
            <person name="Musashino K."/>
            <person name="Yuuki H."/>
            <person name="Oshima A."/>
            <person name="Sasaki N."/>
            <person name="Aotsuka S."/>
            <person name="Yoshikawa Y."/>
            <person name="Matsunawa H."/>
            <person name="Ichihara T."/>
            <person name="Shiohata N."/>
            <person name="Sano S."/>
            <person name="Moriya S."/>
            <person name="Momiyama H."/>
            <person name="Satoh N."/>
            <person name="Takami S."/>
            <person name="Terashima Y."/>
            <person name="Suzuki O."/>
            <person name="Nakagawa S."/>
            <person name="Senoh A."/>
            <person name="Mizoguchi H."/>
            <person name="Goto Y."/>
            <person name="Shimizu F."/>
            <person name="Wakebe H."/>
            <person name="Hishigaki H."/>
            <person name="Watanabe T."/>
            <person name="Sugiyama A."/>
            <person name="Takemoto M."/>
            <person name="Kawakami B."/>
            <person name="Yamazaki M."/>
            <person name="Watanabe K."/>
            <person name="Kumagai A."/>
            <person name="Itakura S."/>
            <person name="Fukuzumi Y."/>
            <person name="Fujimori Y."/>
            <person name="Komiyama M."/>
            <person name="Tashiro H."/>
            <person name="Tanigami A."/>
            <person name="Fujiwara T."/>
            <person name="Ono T."/>
            <person name="Yamada K."/>
            <person name="Fujii Y."/>
            <person name="Ozaki K."/>
            <person name="Hirao M."/>
            <person name="Ohmori Y."/>
            <person name="Kawabata A."/>
            <person name="Hikiji T."/>
            <person name="Kobatake N."/>
            <person name="Inagaki H."/>
            <person name="Ikema Y."/>
            <person name="Okamoto S."/>
            <person name="Okitani R."/>
            <person name="Kawakami T."/>
            <person name="Noguchi S."/>
            <person name="Itoh T."/>
            <person name="Shigeta K."/>
            <person name="Senba T."/>
            <person name="Matsumura K."/>
            <person name="Nakajima Y."/>
            <person name="Mizuno T."/>
            <person name="Morinaga M."/>
            <person name="Sasaki M."/>
            <person name="Togashi T."/>
            <person name="Oyama M."/>
            <person name="Hata H."/>
            <person name="Watanabe M."/>
            <person name="Komatsu T."/>
            <person name="Mizushima-Sugano J."/>
            <person name="Satoh T."/>
            <person name="Shirai Y."/>
            <person name="Takahashi Y."/>
            <person name="Nakagawa K."/>
            <person name="Okumura K."/>
            <person name="Nagase T."/>
            <person name="Nomura N."/>
            <person name="Kikuchi H."/>
            <person name="Masuho Y."/>
            <person name="Yamashita R."/>
            <person name="Nakai K."/>
            <person name="Yada T."/>
            <person name="Nakamura Y."/>
            <person name="Ohara O."/>
            <person name="Isogai T."/>
            <person name="Sugano S."/>
        </authorList>
    </citation>
    <scope>NUCLEOTIDE SEQUENCE [LARGE SCALE MRNA] (ISOFORMS DN-ALPHA; 10 AND 11)</scope>
    <source>
        <tissue>Testis</tissue>
        <tissue>Uterus</tissue>
    </source>
</reference>
<reference key="9">
    <citation type="journal article" date="2006" name="Nature">
        <title>The DNA sequence and biological annotation of human chromosome 1.</title>
        <authorList>
            <person name="Gregory S.G."/>
            <person name="Barlow K.F."/>
            <person name="McLay K.E."/>
            <person name="Kaul R."/>
            <person name="Swarbreck D."/>
            <person name="Dunham A."/>
            <person name="Scott C.E."/>
            <person name="Howe K.L."/>
            <person name="Woodfine K."/>
            <person name="Spencer C.C.A."/>
            <person name="Jones M.C."/>
            <person name="Gillson C."/>
            <person name="Searle S."/>
            <person name="Zhou Y."/>
            <person name="Kokocinski F."/>
            <person name="McDonald L."/>
            <person name="Evans R."/>
            <person name="Phillips K."/>
            <person name="Atkinson A."/>
            <person name="Cooper R."/>
            <person name="Jones C."/>
            <person name="Hall R.E."/>
            <person name="Andrews T.D."/>
            <person name="Lloyd C."/>
            <person name="Ainscough R."/>
            <person name="Almeida J.P."/>
            <person name="Ambrose K.D."/>
            <person name="Anderson F."/>
            <person name="Andrew R.W."/>
            <person name="Ashwell R.I.S."/>
            <person name="Aubin K."/>
            <person name="Babbage A.K."/>
            <person name="Bagguley C.L."/>
            <person name="Bailey J."/>
            <person name="Beasley H."/>
            <person name="Bethel G."/>
            <person name="Bird C.P."/>
            <person name="Bray-Allen S."/>
            <person name="Brown J.Y."/>
            <person name="Brown A.J."/>
            <person name="Buckley D."/>
            <person name="Burton J."/>
            <person name="Bye J."/>
            <person name="Carder C."/>
            <person name="Chapman J.C."/>
            <person name="Clark S.Y."/>
            <person name="Clarke G."/>
            <person name="Clee C."/>
            <person name="Cobley V."/>
            <person name="Collier R.E."/>
            <person name="Corby N."/>
            <person name="Coville G.J."/>
            <person name="Davies J."/>
            <person name="Deadman R."/>
            <person name="Dunn M."/>
            <person name="Earthrowl M."/>
            <person name="Ellington A.G."/>
            <person name="Errington H."/>
            <person name="Frankish A."/>
            <person name="Frankland J."/>
            <person name="French L."/>
            <person name="Garner P."/>
            <person name="Garnett J."/>
            <person name="Gay L."/>
            <person name="Ghori M.R.J."/>
            <person name="Gibson R."/>
            <person name="Gilby L.M."/>
            <person name="Gillett W."/>
            <person name="Glithero R.J."/>
            <person name="Grafham D.V."/>
            <person name="Griffiths C."/>
            <person name="Griffiths-Jones S."/>
            <person name="Grocock R."/>
            <person name="Hammond S."/>
            <person name="Harrison E.S.I."/>
            <person name="Hart E."/>
            <person name="Haugen E."/>
            <person name="Heath P.D."/>
            <person name="Holmes S."/>
            <person name="Holt K."/>
            <person name="Howden P.J."/>
            <person name="Hunt A.R."/>
            <person name="Hunt S.E."/>
            <person name="Hunter G."/>
            <person name="Isherwood J."/>
            <person name="James R."/>
            <person name="Johnson C."/>
            <person name="Johnson D."/>
            <person name="Joy A."/>
            <person name="Kay M."/>
            <person name="Kershaw J.K."/>
            <person name="Kibukawa M."/>
            <person name="Kimberley A.M."/>
            <person name="King A."/>
            <person name="Knights A.J."/>
            <person name="Lad H."/>
            <person name="Laird G."/>
            <person name="Lawlor S."/>
            <person name="Leongamornlert D.A."/>
            <person name="Lloyd D.M."/>
            <person name="Loveland J."/>
            <person name="Lovell J."/>
            <person name="Lush M.J."/>
            <person name="Lyne R."/>
            <person name="Martin S."/>
            <person name="Mashreghi-Mohammadi M."/>
            <person name="Matthews L."/>
            <person name="Matthews N.S.W."/>
            <person name="McLaren S."/>
            <person name="Milne S."/>
            <person name="Mistry S."/>
            <person name="Moore M.J.F."/>
            <person name="Nickerson T."/>
            <person name="O'Dell C.N."/>
            <person name="Oliver K."/>
            <person name="Palmeiri A."/>
            <person name="Palmer S.A."/>
            <person name="Parker A."/>
            <person name="Patel D."/>
            <person name="Pearce A.V."/>
            <person name="Peck A.I."/>
            <person name="Pelan S."/>
            <person name="Phelps K."/>
            <person name="Phillimore B.J."/>
            <person name="Plumb R."/>
            <person name="Rajan J."/>
            <person name="Raymond C."/>
            <person name="Rouse G."/>
            <person name="Saenphimmachak C."/>
            <person name="Sehra H.K."/>
            <person name="Sheridan E."/>
            <person name="Shownkeen R."/>
            <person name="Sims S."/>
            <person name="Skuce C.D."/>
            <person name="Smith M."/>
            <person name="Steward C."/>
            <person name="Subramanian S."/>
            <person name="Sycamore N."/>
            <person name="Tracey A."/>
            <person name="Tromans A."/>
            <person name="Van Helmond Z."/>
            <person name="Wall M."/>
            <person name="Wallis J.M."/>
            <person name="White S."/>
            <person name="Whitehead S.L."/>
            <person name="Wilkinson J.E."/>
            <person name="Willey D.L."/>
            <person name="Williams H."/>
            <person name="Wilming L."/>
            <person name="Wray P.W."/>
            <person name="Wu Z."/>
            <person name="Coulson A."/>
            <person name="Vaudin M."/>
            <person name="Sulston J.E."/>
            <person name="Durbin R.M."/>
            <person name="Hubbard T."/>
            <person name="Wooster R."/>
            <person name="Dunham I."/>
            <person name="Carter N.P."/>
            <person name="McVean G."/>
            <person name="Ross M.T."/>
            <person name="Harrow J."/>
            <person name="Olson M.V."/>
            <person name="Beck S."/>
            <person name="Rogers J."/>
            <person name="Bentley D.R."/>
        </authorList>
    </citation>
    <scope>NUCLEOTIDE SEQUENCE [LARGE SCALE GENOMIC DNA]</scope>
</reference>
<reference key="10">
    <citation type="submission" date="2005-07" db="EMBL/GenBank/DDBJ databases">
        <authorList>
            <person name="Mural R.J."/>
            <person name="Istrail S."/>
            <person name="Sutton G.G."/>
            <person name="Florea L."/>
            <person name="Halpern A.L."/>
            <person name="Mobarry C.M."/>
            <person name="Lippert R."/>
            <person name="Walenz B."/>
            <person name="Shatkay H."/>
            <person name="Dew I."/>
            <person name="Miller J.R."/>
            <person name="Flanigan M.J."/>
            <person name="Edwards N.J."/>
            <person name="Bolanos R."/>
            <person name="Fasulo D."/>
            <person name="Halldorsson B.V."/>
            <person name="Hannenhalli S."/>
            <person name="Turner R."/>
            <person name="Yooseph S."/>
            <person name="Lu F."/>
            <person name="Nusskern D.R."/>
            <person name="Shue B.C."/>
            <person name="Zheng X.H."/>
            <person name="Zhong F."/>
            <person name="Delcher A.L."/>
            <person name="Huson D.H."/>
            <person name="Kravitz S.A."/>
            <person name="Mouchard L."/>
            <person name="Reinert K."/>
            <person name="Remington K.A."/>
            <person name="Clark A.G."/>
            <person name="Waterman M.S."/>
            <person name="Eichler E.E."/>
            <person name="Adams M.D."/>
            <person name="Hunkapiller M.W."/>
            <person name="Myers E.W."/>
            <person name="Venter J.C."/>
        </authorList>
    </citation>
    <scope>NUCLEOTIDE SEQUENCE [LARGE SCALE GENOMIC DNA]</scope>
</reference>
<reference key="11">
    <citation type="journal article" date="2004" name="Genome Res.">
        <title>The status, quality, and expansion of the NIH full-length cDNA project: the Mammalian Gene Collection (MGC).</title>
        <authorList>
            <consortium name="The MGC Project Team"/>
        </authorList>
    </citation>
    <scope>NUCLEOTIDE SEQUENCE [LARGE SCALE MRNA] (ISOFORM ALPHA)</scope>
    <source>
        <tissue>Colon</tissue>
    </source>
</reference>
<reference key="12">
    <citation type="journal article" date="1999" name="Nature">
        <title>p73 is regulated by tyrosine kinase c-Abl in the apoptotic response to DNA damage.</title>
        <authorList>
            <person name="Yuan Z.-M."/>
            <person name="Shioya H."/>
            <person name="Ishiko T."/>
            <person name="Sun X."/>
            <person name="Gu J."/>
            <person name="Huang Y."/>
            <person name="Lu H."/>
            <person name="Kharbanda S."/>
            <person name="Weichselbaum R."/>
            <person name="Kufe D."/>
        </authorList>
    </citation>
    <scope>INTERACTION WITH ABL1</scope>
    <scope>PHOSPHORYLATION AT TYR-99 BY ABL1</scope>
    <scope>MUTAGENESIS OF TYR-99</scope>
</reference>
<reference key="13">
    <citation type="journal article" date="1999" name="Nature">
        <authorList>
            <person name="Yuan Z.-M."/>
            <person name="Shioya H."/>
            <person name="Ishiko T."/>
            <person name="Sun X."/>
            <person name="Gu J."/>
            <person name="Huang Y."/>
            <person name="Lu H."/>
            <person name="Kharbanda S."/>
            <person name="Weichselbaum R."/>
            <person name="Kufe D."/>
        </authorList>
    </citation>
    <scope>ERRATUM OF PUBMED:10391251</scope>
</reference>
<reference key="14">
    <citation type="journal article" date="1999" name="J. Natl. Cancer Inst.">
        <title>The emerging p53 gene family.</title>
        <authorList>
            <person name="Kaelin W.G. Jr."/>
        </authorList>
    </citation>
    <scope>FUNCTION</scope>
</reference>
<reference key="15">
    <citation type="journal article" date="2000" name="J. Biol. Chem.">
        <title>Covalent modification of p73alpha by SUMO-1. Two-hybrid screening with p73 identifies novel SUMO-1-interacting proteins and a SUMO-1 interaction motif.</title>
        <authorList>
            <person name="Minty A."/>
            <person name="Dumont X."/>
            <person name="Kaghad M."/>
            <person name="Caput D."/>
        </authorList>
    </citation>
    <scope>SUMOYLATION AT LYS-627</scope>
    <scope>MUTAGENESIS OF LYS-627</scope>
</reference>
<reference key="16">
    <citation type="journal article" date="2002" name="J. Biol. Chem.">
        <title>Differential effect of ik3-1/cables on p53- and p73-induced cell death.</title>
        <authorList>
            <person name="Tsuji K."/>
            <person name="Mizumoto K."/>
            <person name="Yamochi T."/>
            <person name="Nishimoto I."/>
            <person name="Matsuoka M."/>
        </authorList>
    </citation>
    <scope>IDENTIFICATION IN A COMPLEX WITH CABLES1 AND TP53</scope>
</reference>
<reference key="17">
    <citation type="journal article" date="2002" name="J. Biol. Chem.">
        <title>Identification and characterization of HIPK2 interacting with p73 and modulating functions of the p53 family in vivo.</title>
        <authorList>
            <person name="Kim E.-J."/>
            <person name="Park J.-S."/>
            <person name="Um S.-J."/>
        </authorList>
    </citation>
    <scope>INTERACTION WITH HIPK2</scope>
</reference>
<reference key="18">
    <citation type="journal article" date="2003" name="Biochem. Biophys. Res. Commun.">
        <title>A novel HECT-type E3 ubiquitin ligase, NEDL2, stabilizes p73 and enhances its transcriptional activity.</title>
        <authorList>
            <person name="Miyazaki K."/>
            <person name="Ozaki T."/>
            <person name="Kato C."/>
            <person name="Hanamoto T."/>
            <person name="Fujita T."/>
            <person name="Irino S."/>
            <person name="Watanabe K."/>
            <person name="Nakagawa T."/>
            <person name="Nakagawara A."/>
        </authorList>
    </citation>
    <scope>INTERACTION WITH HECW2</scope>
</reference>
<reference key="19">
    <citation type="journal article" date="2004" name="Proc. Natl. Acad. Sci. U.S.A.">
        <title>Functional association between Wwox tumor suppressor protein and p73, a p53 homolog.</title>
        <authorList>
            <person name="Aqeilan R.I."/>
            <person name="Pekarsky Y."/>
            <person name="Herrero J.J."/>
            <person name="Palamarchuk A."/>
            <person name="Letofsky J."/>
            <person name="Druck T."/>
            <person name="Trapasso F."/>
            <person name="Han S.-Y."/>
            <person name="Melino G."/>
            <person name="Huebner K."/>
            <person name="Croce C.M."/>
        </authorList>
    </citation>
    <scope>INTERACTION WITH WWOX</scope>
    <scope>DOMAIN</scope>
    <scope>MUTAGENESIS OF TYR-487</scope>
</reference>
<reference key="20">
    <citation type="journal article" date="2005" name="Oncogene">
        <title>Protein stability and function of p73 are modulated by a physical interaction with RanBPM in mammalian cultured cells.</title>
        <authorList>
            <person name="Kramer S."/>
            <person name="Ozaki T."/>
            <person name="Miyazaki K."/>
            <person name="Kato C."/>
            <person name="Hanamoto T."/>
            <person name="Nakagawara A."/>
        </authorList>
    </citation>
    <scope>INTERACTION WITH RANBP9</scope>
    <scope>SUBCELLULAR LOCATION</scope>
</reference>
<reference key="21">
    <citation type="journal article" date="2006" name="J. Cell Biol.">
        <title>Transcriptional repression induces a slowly progressive atypical neuronal death associated with changes of YAP isoforms and p73.</title>
        <authorList>
            <person name="Hoshino M."/>
            <person name="Qi M.-L."/>
            <person name="Yoshimura N."/>
            <person name="Tagawa K."/>
            <person name="Wada Y.-I."/>
            <person name="Enokido Y."/>
            <person name="Marubuchi S."/>
            <person name="Harjes P."/>
            <person name="Arai N."/>
            <person name="Oyanagi K."/>
            <person name="Blandino G."/>
            <person name="Sudol M."/>
            <person name="Rich T."/>
            <person name="Kanazawa I."/>
            <person name="Wanker E.E."/>
            <person name="Saitoe M."/>
            <person name="Okazawa H."/>
        </authorList>
    </citation>
    <scope>PHOSPHORYLATION</scope>
    <scope>TISSUE SPECIFICITY</scope>
</reference>
<reference key="22">
    <citation type="journal article" date="2008" name="Cell Cycle">
        <title>p73-mediated transcriptional activity is negatively regulated by polo-like kinase 1.</title>
        <authorList>
            <person name="Soond S.M."/>
            <person name="Barry S.P."/>
            <person name="Melino G."/>
            <person name="Knight R.A."/>
            <person name="Latchman D.S."/>
            <person name="Stephanou A."/>
        </authorList>
    </citation>
    <scope>PHOSPHORYLATION AT THR-27</scope>
</reference>
<reference key="23">
    <citation type="journal article" date="2008" name="J. Biol. Chem.">
        <title>Inhibitory role of Plk1 in the regulation of p73-dependent apoptosis through physical interaction and phosphorylation.</title>
        <authorList>
            <person name="Koida N."/>
            <person name="Ozaki T."/>
            <person name="Yamamoto H."/>
            <person name="Ono S."/>
            <person name="Koda T."/>
            <person name="Ando K."/>
            <person name="Okoshi R."/>
            <person name="Kamijo T."/>
            <person name="Omura K."/>
            <person name="Nakagawara A."/>
        </authorList>
    </citation>
    <scope>FUNCTION</scope>
    <scope>PHOSPHORYLATION AT THR-27</scope>
    <scope>MUTAGENESIS OF THR-27</scope>
</reference>
<reference key="24">
    <citation type="journal article" date="2007" name="BMC Mol. Biol.">
        <title>Regulation of p73 by Hck through kinase-dependent and independent mechanisms.</title>
        <authorList>
            <person name="Paliwal P."/>
            <person name="Radha V."/>
            <person name="Swarup G."/>
        </authorList>
    </citation>
    <scope>PHOSPHORYLATION AT TYR-28</scope>
    <scope>SUBCELLULAR LOCATION</scope>
    <scope>INTERACTION WITH HCK</scope>
</reference>
<reference key="25">
    <citation type="journal article" date="2008" name="Mol. Cell">
        <title>Yap1 phosphorylation by c-Abl is a critical step in selective activation of proapoptotic genes in response to DNA damage.</title>
        <authorList>
            <person name="Levy D."/>
            <person name="Adamovich Y."/>
            <person name="Reuven N."/>
            <person name="Shaul Y."/>
        </authorList>
    </citation>
    <scope>INTERACTION WITH YAP1</scope>
</reference>
<reference key="26">
    <citation type="journal article" date="2009" name="Genes Cells">
        <title>Plk3 inhibits pro-apoptotic activity of p73 through physical interaction and phosphorylation.</title>
        <authorList>
            <person name="Sang M."/>
            <person name="Ando K."/>
            <person name="Okoshi R."/>
            <person name="Koida N."/>
            <person name="Li Y."/>
            <person name="Zhu Y."/>
            <person name="Shimozato O."/>
            <person name="Geng C."/>
            <person name="Shan B."/>
            <person name="Nakagawara A."/>
            <person name="Ozaki T."/>
        </authorList>
    </citation>
    <scope>PHOSPHORYLATION BY PLK3</scope>
</reference>
<reference key="27">
    <citation type="journal article" date="2009" name="Oncogene">
        <title>The F-box protein FBXO45 promotes the proteasome-dependent degradation of p73.</title>
        <authorList>
            <person name="Peschiaroli A."/>
            <person name="Scialpi F."/>
            <person name="Bernassola F."/>
            <person name="Pagano M."/>
            <person name="Melino G."/>
        </authorList>
    </citation>
    <scope>INTERACTION WITH FBXO45</scope>
    <scope>UBIQUITINATION</scope>
</reference>
<reference key="28">
    <citation type="journal article" date="2011" name="Mol. Cancer Res.">
        <title>Pirh2, a ubiquitin E3 ligase, inhibits p73 transcriptional activity by promoting its ubiquitination.</title>
        <authorList>
            <person name="Wu H."/>
            <person name="Zeinab R.A."/>
            <person name="Flores E.R."/>
            <person name="Leng R.P."/>
        </authorList>
    </citation>
    <scope>UBIQUITINATION BY RCHY1/PIRH2</scope>
</reference>
<reference key="29">
    <citation type="journal article" date="2014" name="Virology">
        <title>Epstein-Barr virus nuclear antigen 3C interact with p73: Interplay between a viral oncoprotein and cellular tumor suppressor.</title>
        <authorList>
            <person name="Sahu S.K."/>
            <person name="Mohanty S."/>
            <person name="Kumar A."/>
            <person name="Kundu C.N."/>
            <person name="Verma S.C."/>
            <person name="Choudhuri T."/>
        </authorList>
    </citation>
    <scope>INTERACTION WITH EPSTEIN-BARR VIRUS PROTEIN EBNA6 (MICROBIAL INFECTION)</scope>
    <scope>SUBCELLULAR LOCATION</scope>
</reference>
<reference key="30">
    <citation type="journal article" date="2017" name="Nat. Struct. Mol. Biol.">
        <title>Site-specific mapping of the human SUMO proteome reveals co-modification with phosphorylation.</title>
        <authorList>
            <person name="Hendriks I.A."/>
            <person name="Lyon D."/>
            <person name="Young C."/>
            <person name="Jensen L.J."/>
            <person name="Vertegaal A.C."/>
            <person name="Nielsen M.L."/>
        </authorList>
    </citation>
    <scope>SUMOYLATION [LARGE SCALE ANALYSIS] AT LYS-627</scope>
    <scope>IDENTIFICATION BY MASS SPECTROMETRY [LARGE SCALE ANALYSIS]</scope>
</reference>
<reference key="31">
    <citation type="journal article" date="2017" name="Sci. Rep.">
        <title>Site-to-site interdomain communication may mediate different loss-of-function mechanisms in a cancer-associated NQO1 polymorphism.</title>
        <authorList>
            <person name="Medina-Carmona E."/>
            <person name="Neira J.L."/>
            <person name="Salido E."/>
            <person name="Fuchs J.E."/>
            <person name="Palomino-Morales R."/>
            <person name="Timson D.J."/>
            <person name="Pey A.L."/>
        </authorList>
    </citation>
    <scope>INTERACTION WITH NQO1</scope>
</reference>
<reference key="32">
    <citation type="journal article" date="1999" name="EMBO J.">
        <title>Solution structure of a conserved C-terminal domain of p73 with structural homology to the SAM domain.</title>
        <authorList>
            <person name="Chi S.W."/>
            <person name="Ayed A."/>
            <person name="Arrowsmith C.H."/>
        </authorList>
    </citation>
    <scope>STRUCTURE BY NMR OF 487-554</scope>
</reference>
<reference key="33">
    <citation type="journal article" date="2021" name="Am. J. Hum. Genet.">
        <title>Mutations in TP73 cause impaired mucociliary clearance and lissencephaly.</title>
        <authorList>
            <person name="Wallmeier J."/>
            <person name="Bracht D."/>
            <person name="Alsaif H.S."/>
            <person name="Dougherty G.W."/>
            <person name="Olbrich H."/>
            <person name="Cindric S."/>
            <person name="Dzietko M."/>
            <person name="Heyer C."/>
            <person name="Teig N."/>
            <person name="Thiels C."/>
            <person name="Faqeih E."/>
            <person name="Al-Hashim A."/>
            <person name="Khan S."/>
            <person name="Mogarri I."/>
            <person name="Almannai M."/>
            <person name="Al Otaibi W."/>
            <person name="Alkuraya F.S."/>
            <person name="Koerner-Rettberg C."/>
            <person name="Omran H."/>
        </authorList>
    </citation>
    <scope>VARIANTS CILD47 205-GLU--HIS-636 DEL AND 332-GLN--HIS-636 DEL</scope>
    <scope>INVOLVEMENT IN CILD47</scope>
    <scope>TISSUE SPECIFICITY</scope>
    <scope>FUNCTION</scope>
</reference>
<dbReference type="EMBL" id="Y11416">
    <property type="protein sequence ID" value="CAA72220.1"/>
    <property type="molecule type" value="mRNA"/>
</dbReference>
<dbReference type="EMBL" id="Y11416">
    <property type="protein sequence ID" value="CAA72221.1"/>
    <property type="molecule type" value="mRNA"/>
</dbReference>
<dbReference type="EMBL" id="Y11416">
    <property type="protein sequence ID" value="CAA72219.1"/>
    <property type="molecule type" value="mRNA"/>
</dbReference>
<dbReference type="EMBL" id="AF079094">
    <property type="protein sequence ID" value="AAD39696.1"/>
    <property type="molecule type" value="Genomic_DNA"/>
</dbReference>
<dbReference type="EMBL" id="AF079082">
    <property type="protein sequence ID" value="AAD39696.1"/>
    <property type="status" value="JOINED"/>
    <property type="molecule type" value="Genomic_DNA"/>
</dbReference>
<dbReference type="EMBL" id="AF079083">
    <property type="protein sequence ID" value="AAD39696.1"/>
    <property type="status" value="JOINED"/>
    <property type="molecule type" value="Genomic_DNA"/>
</dbReference>
<dbReference type="EMBL" id="AF079084">
    <property type="protein sequence ID" value="AAD39696.1"/>
    <property type="status" value="JOINED"/>
    <property type="molecule type" value="Genomic_DNA"/>
</dbReference>
<dbReference type="EMBL" id="AF079085">
    <property type="protein sequence ID" value="AAD39696.1"/>
    <property type="status" value="JOINED"/>
    <property type="molecule type" value="Genomic_DNA"/>
</dbReference>
<dbReference type="EMBL" id="AF079086">
    <property type="protein sequence ID" value="AAD39696.1"/>
    <property type="status" value="JOINED"/>
    <property type="molecule type" value="Genomic_DNA"/>
</dbReference>
<dbReference type="EMBL" id="AF079087">
    <property type="protein sequence ID" value="AAD39696.1"/>
    <property type="status" value="JOINED"/>
    <property type="molecule type" value="Genomic_DNA"/>
</dbReference>
<dbReference type="EMBL" id="AF079088">
    <property type="protein sequence ID" value="AAD39696.1"/>
    <property type="status" value="JOINED"/>
    <property type="molecule type" value="Genomic_DNA"/>
</dbReference>
<dbReference type="EMBL" id="AF079089">
    <property type="protein sequence ID" value="AAD39696.1"/>
    <property type="status" value="JOINED"/>
    <property type="molecule type" value="Genomic_DNA"/>
</dbReference>
<dbReference type="EMBL" id="AF079090">
    <property type="protein sequence ID" value="AAD39696.1"/>
    <property type="status" value="JOINED"/>
    <property type="molecule type" value="Genomic_DNA"/>
</dbReference>
<dbReference type="EMBL" id="AF079091">
    <property type="protein sequence ID" value="AAD39696.1"/>
    <property type="status" value="JOINED"/>
    <property type="molecule type" value="Genomic_DNA"/>
</dbReference>
<dbReference type="EMBL" id="AF079092">
    <property type="protein sequence ID" value="AAD39696.1"/>
    <property type="status" value="JOINED"/>
    <property type="molecule type" value="Genomic_DNA"/>
</dbReference>
<dbReference type="EMBL" id="AF079093">
    <property type="protein sequence ID" value="AAD39696.1"/>
    <property type="status" value="JOINED"/>
    <property type="molecule type" value="Genomic_DNA"/>
</dbReference>
<dbReference type="EMBL" id="AF077628">
    <property type="protein sequence ID" value="AAC61887.1"/>
    <property type="molecule type" value="Genomic_DNA"/>
</dbReference>
<dbReference type="EMBL" id="AF077616">
    <property type="protein sequence ID" value="AAC61887.1"/>
    <property type="status" value="JOINED"/>
    <property type="molecule type" value="Genomic_DNA"/>
</dbReference>
<dbReference type="EMBL" id="AF077617">
    <property type="protein sequence ID" value="AAC61887.1"/>
    <property type="status" value="JOINED"/>
    <property type="molecule type" value="Genomic_DNA"/>
</dbReference>
<dbReference type="EMBL" id="AF077618">
    <property type="protein sequence ID" value="AAC61887.1"/>
    <property type="status" value="JOINED"/>
    <property type="molecule type" value="Genomic_DNA"/>
</dbReference>
<dbReference type="EMBL" id="AF077619">
    <property type="protein sequence ID" value="AAC61887.1"/>
    <property type="status" value="JOINED"/>
    <property type="molecule type" value="Genomic_DNA"/>
</dbReference>
<dbReference type="EMBL" id="AF077620">
    <property type="protein sequence ID" value="AAC61887.1"/>
    <property type="status" value="JOINED"/>
    <property type="molecule type" value="Genomic_DNA"/>
</dbReference>
<dbReference type="EMBL" id="AF077621">
    <property type="protein sequence ID" value="AAC61887.1"/>
    <property type="status" value="JOINED"/>
    <property type="molecule type" value="Genomic_DNA"/>
</dbReference>
<dbReference type="EMBL" id="AF077624">
    <property type="protein sequence ID" value="AAC61887.1"/>
    <property type="status" value="JOINED"/>
    <property type="molecule type" value="Genomic_DNA"/>
</dbReference>
<dbReference type="EMBL" id="AF077625">
    <property type="protein sequence ID" value="AAC61887.1"/>
    <property type="status" value="JOINED"/>
    <property type="molecule type" value="Genomic_DNA"/>
</dbReference>
<dbReference type="EMBL" id="AF077626">
    <property type="protein sequence ID" value="AAC61887.1"/>
    <property type="status" value="JOINED"/>
    <property type="molecule type" value="Genomic_DNA"/>
</dbReference>
<dbReference type="EMBL" id="AF077627">
    <property type="protein sequence ID" value="AAC61887.1"/>
    <property type="status" value="JOINED"/>
    <property type="molecule type" value="Genomic_DNA"/>
</dbReference>
<dbReference type="EMBL" id="AY040827">
    <property type="protein sequence ID" value="AAK81884.1"/>
    <property type="molecule type" value="mRNA"/>
</dbReference>
<dbReference type="EMBL" id="AY040828">
    <property type="protein sequence ID" value="AAK81885.1"/>
    <property type="molecule type" value="mRNA"/>
</dbReference>
<dbReference type="EMBL" id="AY040829">
    <property type="protein sequence ID" value="AAK81886.1"/>
    <property type="molecule type" value="mRNA"/>
</dbReference>
<dbReference type="EMBL" id="AB055065">
    <property type="protein sequence ID" value="BAB87244.1"/>
    <property type="molecule type" value="mRNA"/>
</dbReference>
<dbReference type="EMBL" id="AB055066">
    <property type="protein sequence ID" value="BAB87245.1"/>
    <property type="molecule type" value="mRNA"/>
</dbReference>
<dbReference type="EMBL" id="AK302118">
    <property type="protein sequence ID" value="BAH13630.1"/>
    <property type="molecule type" value="mRNA"/>
</dbReference>
<dbReference type="EMBL" id="AK304177">
    <property type="protein sequence ID" value="BAH14127.1"/>
    <property type="molecule type" value="mRNA"/>
</dbReference>
<dbReference type="EMBL" id="AK304784">
    <property type="protein sequence ID" value="BAH14257.1"/>
    <property type="molecule type" value="mRNA"/>
</dbReference>
<dbReference type="EMBL" id="AL136528">
    <property type="status" value="NOT_ANNOTATED_CDS"/>
    <property type="molecule type" value="Genomic_DNA"/>
</dbReference>
<dbReference type="EMBL" id="CH471130">
    <property type="protein sequence ID" value="EAW71464.1"/>
    <property type="molecule type" value="Genomic_DNA"/>
</dbReference>
<dbReference type="EMBL" id="BC117251">
    <property type="protein sequence ID" value="AAI17252.1"/>
    <property type="molecule type" value="mRNA"/>
</dbReference>
<dbReference type="EMBL" id="BC117253">
    <property type="protein sequence ID" value="AAI17254.1"/>
    <property type="molecule type" value="mRNA"/>
</dbReference>
<dbReference type="CCDS" id="CCDS44049.1">
    <molecule id="O15350-8"/>
</dbReference>
<dbReference type="CCDS" id="CCDS44050.1">
    <molecule id="O15350-9"/>
</dbReference>
<dbReference type="CCDS" id="CCDS49.1">
    <molecule id="O15350-1"/>
</dbReference>
<dbReference type="CCDS" id="CCDS55566.1">
    <molecule id="O15350-2"/>
</dbReference>
<dbReference type="CCDS" id="CCDS55567.1">
    <molecule id="O15350-13"/>
</dbReference>
<dbReference type="CCDS" id="CCDS55568.1">
    <molecule id="O15350-6"/>
</dbReference>
<dbReference type="CCDS" id="CCDS55569.1">
    <molecule id="O15350-11"/>
</dbReference>
<dbReference type="CCDS" id="CCDS59965.1">
    <molecule id="O15350-4"/>
</dbReference>
<dbReference type="RefSeq" id="NP_001119712.1">
    <molecule id="O15350-8"/>
    <property type="nucleotide sequence ID" value="NM_001126240.3"/>
</dbReference>
<dbReference type="RefSeq" id="NP_001119713.1">
    <molecule id="O15350-9"/>
    <property type="nucleotide sequence ID" value="NM_001126241.3"/>
</dbReference>
<dbReference type="RefSeq" id="NP_001119714.1">
    <property type="nucleotide sequence ID" value="NM_001126242.2"/>
</dbReference>
<dbReference type="RefSeq" id="NP_001191113.1">
    <molecule id="O15350-2"/>
    <property type="nucleotide sequence ID" value="NM_001204184.2"/>
</dbReference>
<dbReference type="RefSeq" id="NP_001191114.1">
    <property type="nucleotide sequence ID" value="NM_001204185.1"/>
</dbReference>
<dbReference type="RefSeq" id="NP_001191115.1">
    <molecule id="O15350-4"/>
    <property type="nucleotide sequence ID" value="NM_001204186.2"/>
</dbReference>
<dbReference type="RefSeq" id="NP_001191116.1">
    <molecule id="O15350-13"/>
    <property type="nucleotide sequence ID" value="NM_001204187.2"/>
</dbReference>
<dbReference type="RefSeq" id="NP_001191117.1">
    <molecule id="O15350-6"/>
    <property type="nucleotide sequence ID" value="NM_001204188.2"/>
</dbReference>
<dbReference type="RefSeq" id="NP_001191118.1">
    <property type="nucleotide sequence ID" value="NM_001204189.1"/>
</dbReference>
<dbReference type="RefSeq" id="NP_001191119.1">
    <property type="nucleotide sequence ID" value="NM_001204190.1"/>
</dbReference>
<dbReference type="RefSeq" id="NP_001191120.1">
    <property type="nucleotide sequence ID" value="NM_001204191.1"/>
</dbReference>
<dbReference type="RefSeq" id="NP_001191121.1">
    <molecule id="O15350-11"/>
    <property type="nucleotide sequence ID" value="NM_001204192.2"/>
</dbReference>
<dbReference type="RefSeq" id="NP_005418.1">
    <molecule id="O15350-1"/>
    <property type="nucleotide sequence ID" value="NM_005427.4"/>
</dbReference>
<dbReference type="RefSeq" id="XP_047285477.1">
    <molecule id="O15350-1"/>
    <property type="nucleotide sequence ID" value="XM_047429521.1"/>
</dbReference>
<dbReference type="RefSeq" id="XP_047285480.1">
    <molecule id="O15350-1"/>
    <property type="nucleotide sequence ID" value="XM_047429524.1"/>
</dbReference>
<dbReference type="RefSeq" id="XP_054194554.1">
    <molecule id="O15350-1"/>
    <property type="nucleotide sequence ID" value="XM_054338579.1"/>
</dbReference>
<dbReference type="RefSeq" id="XP_054194555.1">
    <molecule id="O15350-1"/>
    <property type="nucleotide sequence ID" value="XM_054338580.1"/>
</dbReference>
<dbReference type="PDB" id="1COK">
    <property type="method" value="NMR"/>
    <property type="chains" value="A=487-554"/>
</dbReference>
<dbReference type="PDB" id="1DXS">
    <property type="method" value="X-ray"/>
    <property type="resolution" value="2.54 A"/>
    <property type="chains" value="A=487-564"/>
</dbReference>
<dbReference type="PDB" id="2KBY">
    <property type="method" value="NMR"/>
    <property type="chains" value="A/B/C/D=351-398"/>
</dbReference>
<dbReference type="PDB" id="2MPS">
    <property type="method" value="NMR"/>
    <property type="chains" value="B=10-25"/>
</dbReference>
<dbReference type="PDB" id="2NB1">
    <property type="method" value="NMR"/>
    <property type="chains" value="B/D=351-398"/>
</dbReference>
<dbReference type="PDB" id="2WQI">
    <property type="method" value="X-ray"/>
    <property type="resolution" value="1.70 A"/>
    <property type="chains" value="A/B/C/D=351-399"/>
</dbReference>
<dbReference type="PDB" id="2WQJ">
    <property type="method" value="X-ray"/>
    <property type="resolution" value="2.00 A"/>
    <property type="chains" value="1/2/A/B/C/D/E/F/G/H/I/J/K/L/M/N/O/P/Q/R/S/T/U/V/W/X/Y/Z=351-383"/>
</dbReference>
<dbReference type="PDB" id="2WTT">
    <property type="method" value="X-ray"/>
    <property type="resolution" value="2.30 A"/>
    <property type="chains" value="A/B/C/D/E/F/G/H/I/J/K/L/M/N/O/P=351-399"/>
</dbReference>
<dbReference type="PDB" id="2XWC">
    <property type="method" value="X-ray"/>
    <property type="resolution" value="1.82 A"/>
    <property type="chains" value="A=112-311"/>
</dbReference>
<dbReference type="PDB" id="3VD0">
    <property type="method" value="X-ray"/>
    <property type="resolution" value="2.95 A"/>
    <property type="chains" value="A/B/C/D/I/J/K/L=115-312"/>
</dbReference>
<dbReference type="PDB" id="3VD1">
    <property type="method" value="X-ray"/>
    <property type="resolution" value="2.95 A"/>
    <property type="chains" value="A/B/C/D/I/J/K/L=115-312"/>
</dbReference>
<dbReference type="PDB" id="3VD2">
    <property type="method" value="X-ray"/>
    <property type="resolution" value="4.00 A"/>
    <property type="chains" value="A/B/C/D/I/J=115-312"/>
</dbReference>
<dbReference type="PDB" id="4A63">
    <property type="method" value="X-ray"/>
    <property type="resolution" value="2.27 A"/>
    <property type="chains" value="A/C/E/G/I/K=112-311"/>
</dbReference>
<dbReference type="PDB" id="4G82">
    <property type="method" value="X-ray"/>
    <property type="resolution" value="3.10 A"/>
    <property type="chains" value="A/B=115-312"/>
</dbReference>
<dbReference type="PDB" id="4G83">
    <property type="method" value="X-ray"/>
    <property type="resolution" value="4.00 A"/>
    <property type="chains" value="A/B=115-312"/>
</dbReference>
<dbReference type="PDB" id="4GUO">
    <property type="method" value="X-ray"/>
    <property type="resolution" value="3.19 A"/>
    <property type="chains" value="A/B/C/D/I/J/K/L=115-312"/>
</dbReference>
<dbReference type="PDB" id="4GUQ">
    <property type="method" value="X-ray"/>
    <property type="resolution" value="3.70 A"/>
    <property type="chains" value="A/B=115-312"/>
</dbReference>
<dbReference type="PDB" id="5HOB">
    <property type="method" value="X-ray"/>
    <property type="resolution" value="1.22 A"/>
    <property type="chains" value="A/B/C/D/E/F/G/H=351-398"/>
</dbReference>
<dbReference type="PDB" id="5HOC">
    <property type="method" value="X-ray"/>
    <property type="resolution" value="1.36 A"/>
    <property type="chains" value="A/B=351-398"/>
</dbReference>
<dbReference type="PDB" id="5KBD">
    <property type="method" value="X-ray"/>
    <property type="resolution" value="2.80 A"/>
    <property type="chains" value="A/B=115-312"/>
</dbReference>
<dbReference type="PDB" id="6FGS">
    <property type="method" value="NMR"/>
    <property type="chains" value="A=10-31"/>
</dbReference>
<dbReference type="PDB" id="6IJQ">
    <property type="method" value="NMR"/>
    <property type="chains" value="A=10-25"/>
</dbReference>
<dbReference type="PDB" id="7EZJ">
    <property type="method" value="X-ray"/>
    <property type="resolution" value="2.90 A"/>
    <property type="chains" value="A/B/C/D/I/J/K/L/a/b/c/d/i/j/k/l=115-312"/>
</dbReference>
<dbReference type="PDB" id="8P9C">
    <property type="method" value="X-ray"/>
    <property type="resolution" value="1.76 A"/>
    <property type="chains" value="B=351-398"/>
</dbReference>
<dbReference type="PDB" id="8P9D">
    <property type="method" value="X-ray"/>
    <property type="resolution" value="2.70 A"/>
    <property type="chains" value="B/D=351-398"/>
</dbReference>
<dbReference type="PDB" id="8P9E">
    <property type="method" value="X-ray"/>
    <property type="resolution" value="2.25 A"/>
    <property type="chains" value="B=351-398"/>
</dbReference>
<dbReference type="PDB" id="9GLQ">
    <property type="method" value="X-ray"/>
    <property type="resolution" value="2.10 A"/>
    <property type="chains" value="A/B=351-398"/>
</dbReference>
<dbReference type="PDB" id="9GNB">
    <property type="method" value="X-ray"/>
    <property type="resolution" value="1.80 A"/>
    <property type="chains" value="A=489-550"/>
</dbReference>
<dbReference type="PDBsum" id="1COK"/>
<dbReference type="PDBsum" id="1DXS"/>
<dbReference type="PDBsum" id="2KBY"/>
<dbReference type="PDBsum" id="2MPS"/>
<dbReference type="PDBsum" id="2NB1"/>
<dbReference type="PDBsum" id="2WQI"/>
<dbReference type="PDBsum" id="2WQJ"/>
<dbReference type="PDBsum" id="2WTT"/>
<dbReference type="PDBsum" id="2XWC"/>
<dbReference type="PDBsum" id="3VD0"/>
<dbReference type="PDBsum" id="3VD1"/>
<dbReference type="PDBsum" id="3VD2"/>
<dbReference type="PDBsum" id="4A63"/>
<dbReference type="PDBsum" id="4G82"/>
<dbReference type="PDBsum" id="4G83"/>
<dbReference type="PDBsum" id="4GUO"/>
<dbReference type="PDBsum" id="4GUQ"/>
<dbReference type="PDBsum" id="5HOB"/>
<dbReference type="PDBsum" id="5HOC"/>
<dbReference type="PDBsum" id="5KBD"/>
<dbReference type="PDBsum" id="6FGS"/>
<dbReference type="PDBsum" id="6IJQ"/>
<dbReference type="PDBsum" id="7EZJ"/>
<dbReference type="PDBsum" id="8P9C"/>
<dbReference type="PDBsum" id="8P9D"/>
<dbReference type="PDBsum" id="8P9E"/>
<dbReference type="PDBsum" id="9GLQ"/>
<dbReference type="PDBsum" id="9GNB"/>
<dbReference type="EMDB" id="EMD-11858"/>
<dbReference type="SMR" id="O15350"/>
<dbReference type="BioGRID" id="113014">
    <property type="interactions" value="159"/>
</dbReference>
<dbReference type="CORUM" id="O15350"/>
<dbReference type="DIP" id="DIP-24202N"/>
<dbReference type="ELM" id="O15350"/>
<dbReference type="FunCoup" id="O15350">
    <property type="interactions" value="1527"/>
</dbReference>
<dbReference type="IntAct" id="O15350">
    <property type="interactions" value="48"/>
</dbReference>
<dbReference type="MINT" id="O15350"/>
<dbReference type="STRING" id="9606.ENSP00000367545"/>
<dbReference type="DrugBank" id="DB01593">
    <property type="generic name" value="Zinc"/>
</dbReference>
<dbReference type="DrugBank" id="DB14487">
    <property type="generic name" value="Zinc acetate"/>
</dbReference>
<dbReference type="DrugBank" id="DB14533">
    <property type="generic name" value="Zinc chloride"/>
</dbReference>
<dbReference type="DrugBank" id="DB14548">
    <property type="generic name" value="Zinc sulfate, unspecified form"/>
</dbReference>
<dbReference type="iPTMnet" id="O15350"/>
<dbReference type="PhosphoSitePlus" id="O15350"/>
<dbReference type="BioMuta" id="TP73"/>
<dbReference type="jPOST" id="O15350"/>
<dbReference type="MassIVE" id="O15350"/>
<dbReference type="PaxDb" id="9606-ENSP00000367545"/>
<dbReference type="PeptideAtlas" id="O15350"/>
<dbReference type="ProteomicsDB" id="48597">
    <molecule id="O15350-1"/>
</dbReference>
<dbReference type="ProteomicsDB" id="48598">
    <molecule id="O15350-10"/>
</dbReference>
<dbReference type="ProteomicsDB" id="48599">
    <molecule id="O15350-2"/>
</dbReference>
<dbReference type="ProteomicsDB" id="48600">
    <molecule id="O15350-3"/>
</dbReference>
<dbReference type="ProteomicsDB" id="48601">
    <molecule id="O15350-4"/>
</dbReference>
<dbReference type="ProteomicsDB" id="48602">
    <molecule id="O15350-5"/>
</dbReference>
<dbReference type="ProteomicsDB" id="48603">
    <molecule id="O15350-6"/>
</dbReference>
<dbReference type="ProteomicsDB" id="48604">
    <molecule id="O15350-8"/>
</dbReference>
<dbReference type="ProteomicsDB" id="48605">
    <molecule id="O15350-9"/>
</dbReference>
<dbReference type="ProteomicsDB" id="6877"/>
<dbReference type="ProteomicsDB" id="8551"/>
<dbReference type="Pumba" id="O15350"/>
<dbReference type="Antibodypedia" id="3467">
    <property type="antibodies" value="1167 antibodies from 44 providers"/>
</dbReference>
<dbReference type="DNASU" id="7161"/>
<dbReference type="Ensembl" id="ENST00000354437.8">
    <molecule id="O15350-2"/>
    <property type="protein sequence ID" value="ENSP00000346423.4"/>
    <property type="gene ID" value="ENSG00000078900.16"/>
</dbReference>
<dbReference type="Ensembl" id="ENST00000378285.5">
    <molecule id="O15350-9"/>
    <property type="protein sequence ID" value="ENSP00000367534.1"/>
    <property type="gene ID" value="ENSG00000078900.16"/>
</dbReference>
<dbReference type="Ensembl" id="ENST00000378288.8">
    <molecule id="O15350-8"/>
    <property type="protein sequence ID" value="ENSP00000367537.4"/>
    <property type="gene ID" value="ENSG00000078900.16"/>
</dbReference>
<dbReference type="Ensembl" id="ENST00000378290.4">
    <molecule id="O15350-11"/>
    <property type="protein sequence ID" value="ENSP00000367539.4"/>
    <property type="gene ID" value="ENSG00000078900.16"/>
</dbReference>
<dbReference type="Ensembl" id="ENST00000378295.9">
    <molecule id="O15350-1"/>
    <property type="protein sequence ID" value="ENSP00000367545.4"/>
    <property type="gene ID" value="ENSG00000078900.16"/>
</dbReference>
<dbReference type="Ensembl" id="ENST00000603362.6">
    <molecule id="O15350-13"/>
    <property type="protein sequence ID" value="ENSP00000474626.1"/>
    <property type="gene ID" value="ENSG00000078900.16"/>
</dbReference>
<dbReference type="Ensembl" id="ENST00000604074.5">
    <molecule id="O15350-4"/>
    <property type="protein sequence ID" value="ENSP00000475143.1"/>
    <property type="gene ID" value="ENSG00000078900.16"/>
</dbReference>
<dbReference type="Ensembl" id="ENST00000604479.6">
    <molecule id="O15350-6"/>
    <property type="protein sequence ID" value="ENSP00000474322.1"/>
    <property type="gene ID" value="ENSG00000078900.16"/>
</dbReference>
<dbReference type="Ensembl" id="ENST00000713570.1">
    <molecule id="O15350-1"/>
    <property type="protein sequence ID" value="ENSP00000518863.1"/>
    <property type="gene ID" value="ENSG00000078900.16"/>
</dbReference>
<dbReference type="Ensembl" id="ENST00000713572.1">
    <molecule id="O15350-1"/>
    <property type="protein sequence ID" value="ENSP00000518864.1"/>
    <property type="gene ID" value="ENSG00000078900.16"/>
</dbReference>
<dbReference type="GeneID" id="7161"/>
<dbReference type="KEGG" id="hsa:7161"/>
<dbReference type="MANE-Select" id="ENST00000378295.9">
    <property type="protein sequence ID" value="ENSP00000367545.4"/>
    <property type="RefSeq nucleotide sequence ID" value="NM_005427.4"/>
    <property type="RefSeq protein sequence ID" value="NP_005418.1"/>
</dbReference>
<dbReference type="UCSC" id="uc001akp.4">
    <molecule id="O15350-1"/>
    <property type="organism name" value="human"/>
</dbReference>
<dbReference type="AGR" id="HGNC:12003"/>
<dbReference type="CTD" id="7161"/>
<dbReference type="DisGeNET" id="7161"/>
<dbReference type="GeneCards" id="TP73"/>
<dbReference type="HGNC" id="HGNC:12003">
    <property type="gene designation" value="TP73"/>
</dbReference>
<dbReference type="HPA" id="ENSG00000078900">
    <property type="expression patterns" value="Tissue enhanced (brain, fallopian tube, skin)"/>
</dbReference>
<dbReference type="MalaCards" id="TP73"/>
<dbReference type="MIM" id="601990">
    <property type="type" value="gene"/>
</dbReference>
<dbReference type="MIM" id="619466">
    <property type="type" value="phenotype"/>
</dbReference>
<dbReference type="neXtProt" id="NX_O15350"/>
<dbReference type="OpenTargets" id="ENSG00000078900"/>
<dbReference type="Orphanet" id="70573">
    <property type="disease" value="Small cell lung cancer"/>
</dbReference>
<dbReference type="PharmGKB" id="PA36684"/>
<dbReference type="VEuPathDB" id="HostDB:ENSG00000078900"/>
<dbReference type="eggNOG" id="ENOG502QQ48">
    <property type="taxonomic scope" value="Eukaryota"/>
</dbReference>
<dbReference type="GeneTree" id="ENSGT00950000183153"/>
<dbReference type="HOGENOM" id="CLU_019621_1_0_1"/>
<dbReference type="InParanoid" id="O15350"/>
<dbReference type="OMA" id="PSNGEMN"/>
<dbReference type="OrthoDB" id="5915660at2759"/>
<dbReference type="PAN-GO" id="O15350">
    <property type="GO annotations" value="3 GO annotations based on evolutionary models"/>
</dbReference>
<dbReference type="PhylomeDB" id="O15350"/>
<dbReference type="TreeFam" id="TF106101"/>
<dbReference type="PathwayCommons" id="O15350"/>
<dbReference type="Reactome" id="R-HSA-139915">
    <property type="pathway name" value="Activation of PUMA and translocation to mitochondria"/>
</dbReference>
<dbReference type="Reactome" id="R-HSA-6803204">
    <property type="pathway name" value="TP53 Regulates Transcription of Genes Involved in Cytochrome C Release"/>
</dbReference>
<dbReference type="Reactome" id="R-HSA-6803205">
    <property type="pathway name" value="TP53 regulates transcription of several additional cell death genes whose specific roles in p53-dependent apoptosis remain uncertain"/>
</dbReference>
<dbReference type="Reactome" id="R-HSA-6803207">
    <property type="pathway name" value="TP53 Regulates Transcription of Caspase Activators and Caspases"/>
</dbReference>
<dbReference type="Reactome" id="R-HSA-6803211">
    <property type="pathway name" value="TP53 Regulates Transcription of Death Receptors and Ligands"/>
</dbReference>
<dbReference type="Reactome" id="R-HSA-6804759">
    <property type="pathway name" value="Regulation of TP53 Activity through Association with Co-factors"/>
</dbReference>
<dbReference type="Reactome" id="R-HSA-8939236">
    <property type="pathway name" value="RUNX1 regulates transcription of genes involved in differentiation of HSCs"/>
</dbReference>
<dbReference type="SignaLink" id="O15350"/>
<dbReference type="SIGNOR" id="O15350"/>
<dbReference type="BioGRID-ORCS" id="7161">
    <property type="hits" value="23 hits in 1193 CRISPR screens"/>
</dbReference>
<dbReference type="CD-CODE" id="B5B9A610">
    <property type="entry name" value="PML body"/>
</dbReference>
<dbReference type="ChiTaRS" id="TP73">
    <property type="organism name" value="human"/>
</dbReference>
<dbReference type="EvolutionaryTrace" id="O15350"/>
<dbReference type="GeneWiki" id="P73"/>
<dbReference type="GenomeRNAi" id="7161"/>
<dbReference type="Pharos" id="O15350">
    <property type="development level" value="Tbio"/>
</dbReference>
<dbReference type="PRO" id="PR:O15350"/>
<dbReference type="Proteomes" id="UP000005640">
    <property type="component" value="Chromosome 1"/>
</dbReference>
<dbReference type="RNAct" id="O15350">
    <property type="molecule type" value="protein"/>
</dbReference>
<dbReference type="Bgee" id="ENSG00000078900">
    <property type="expression patterns" value="Expressed in right uterine tube and 101 other cell types or tissues"/>
</dbReference>
<dbReference type="ExpressionAtlas" id="O15350">
    <property type="expression patterns" value="baseline and differential"/>
</dbReference>
<dbReference type="GO" id="GO:0030054">
    <property type="term" value="C:cell junction"/>
    <property type="evidence" value="ECO:0000314"/>
    <property type="project" value="HPA"/>
</dbReference>
<dbReference type="GO" id="GO:0005813">
    <property type="term" value="C:centrosome"/>
    <property type="evidence" value="ECO:0000314"/>
    <property type="project" value="HPA"/>
</dbReference>
<dbReference type="GO" id="GO:0000785">
    <property type="term" value="C:chromatin"/>
    <property type="evidence" value="ECO:0000247"/>
    <property type="project" value="NTNU_SB"/>
</dbReference>
<dbReference type="GO" id="GO:0036064">
    <property type="term" value="C:ciliary basal body"/>
    <property type="evidence" value="ECO:0000314"/>
    <property type="project" value="HPA"/>
</dbReference>
<dbReference type="GO" id="GO:0005829">
    <property type="term" value="C:cytosol"/>
    <property type="evidence" value="ECO:0000304"/>
    <property type="project" value="Reactome"/>
</dbReference>
<dbReference type="GO" id="GO:0005794">
    <property type="term" value="C:Golgi apparatus"/>
    <property type="evidence" value="ECO:0000314"/>
    <property type="project" value="HPA"/>
</dbReference>
<dbReference type="GO" id="GO:0043231">
    <property type="term" value="C:intracellular membrane-bounded organelle"/>
    <property type="evidence" value="ECO:0000314"/>
    <property type="project" value="HPA"/>
</dbReference>
<dbReference type="GO" id="GO:0005654">
    <property type="term" value="C:nucleoplasm"/>
    <property type="evidence" value="ECO:0000314"/>
    <property type="project" value="HPA"/>
</dbReference>
<dbReference type="GO" id="GO:0005634">
    <property type="term" value="C:nucleus"/>
    <property type="evidence" value="ECO:0000314"/>
    <property type="project" value="AgBase"/>
</dbReference>
<dbReference type="GO" id="GO:0005886">
    <property type="term" value="C:plasma membrane"/>
    <property type="evidence" value="ECO:0000314"/>
    <property type="project" value="HPA"/>
</dbReference>
<dbReference type="GO" id="GO:0001228">
    <property type="term" value="F:DNA-binding transcription activator activity, RNA polymerase II-specific"/>
    <property type="evidence" value="ECO:0000314"/>
    <property type="project" value="NTNU_SB"/>
</dbReference>
<dbReference type="GO" id="GO:0003700">
    <property type="term" value="F:DNA-binding transcription factor activity"/>
    <property type="evidence" value="ECO:0000314"/>
    <property type="project" value="MGI"/>
</dbReference>
<dbReference type="GO" id="GO:0000981">
    <property type="term" value="F:DNA-binding transcription factor activity, RNA polymerase II-specific"/>
    <property type="evidence" value="ECO:0000314"/>
    <property type="project" value="UniProtKB"/>
</dbReference>
<dbReference type="GO" id="GO:0140297">
    <property type="term" value="F:DNA-binding transcription factor binding"/>
    <property type="evidence" value="ECO:0000353"/>
    <property type="project" value="ARUK-UCL"/>
</dbReference>
<dbReference type="GO" id="GO:0042802">
    <property type="term" value="F:identical protein binding"/>
    <property type="evidence" value="ECO:0000353"/>
    <property type="project" value="UniProtKB"/>
</dbReference>
<dbReference type="GO" id="GO:0097371">
    <property type="term" value="F:MDM2/MDM4 family protein binding"/>
    <property type="evidence" value="ECO:0000353"/>
    <property type="project" value="CAFA"/>
</dbReference>
<dbReference type="GO" id="GO:0046872">
    <property type="term" value="F:metal ion binding"/>
    <property type="evidence" value="ECO:0007669"/>
    <property type="project" value="UniProtKB-KW"/>
</dbReference>
<dbReference type="GO" id="GO:0002039">
    <property type="term" value="F:p53 binding"/>
    <property type="evidence" value="ECO:0000353"/>
    <property type="project" value="CAFA"/>
</dbReference>
<dbReference type="GO" id="GO:0019901">
    <property type="term" value="F:protein kinase binding"/>
    <property type="evidence" value="ECO:0000353"/>
    <property type="project" value="UniProtKB"/>
</dbReference>
<dbReference type="GO" id="GO:0000978">
    <property type="term" value="F:RNA polymerase II cis-regulatory region sequence-specific DNA binding"/>
    <property type="evidence" value="ECO:0000314"/>
    <property type="project" value="NTNU_SB"/>
</dbReference>
<dbReference type="GO" id="GO:0061629">
    <property type="term" value="F:RNA polymerase II-specific DNA-binding transcription factor binding"/>
    <property type="evidence" value="ECO:0000353"/>
    <property type="project" value="ARUK-UCL"/>
</dbReference>
<dbReference type="GO" id="GO:0000976">
    <property type="term" value="F:transcription cis-regulatory region binding"/>
    <property type="evidence" value="ECO:0000314"/>
    <property type="project" value="UniProtKB"/>
</dbReference>
<dbReference type="GO" id="GO:0001222">
    <property type="term" value="F:transcription corepressor binding"/>
    <property type="evidence" value="ECO:0000353"/>
    <property type="project" value="UniProtKB"/>
</dbReference>
<dbReference type="GO" id="GO:0033326">
    <property type="term" value="P:cerebrospinal fluid secretion"/>
    <property type="evidence" value="ECO:0007669"/>
    <property type="project" value="Ensembl"/>
</dbReference>
<dbReference type="GO" id="GO:0048546">
    <property type="term" value="P:digestive tract morphogenesis"/>
    <property type="evidence" value="ECO:0007669"/>
    <property type="project" value="Ensembl"/>
</dbReference>
<dbReference type="GO" id="GO:0006974">
    <property type="term" value="P:DNA damage response"/>
    <property type="evidence" value="ECO:0000314"/>
    <property type="project" value="UniProtKB"/>
</dbReference>
<dbReference type="GO" id="GO:0021766">
    <property type="term" value="P:hippocampus development"/>
    <property type="evidence" value="ECO:0007669"/>
    <property type="project" value="Ensembl"/>
</dbReference>
<dbReference type="GO" id="GO:0006954">
    <property type="term" value="P:inflammatory response"/>
    <property type="evidence" value="ECO:0007669"/>
    <property type="project" value="Ensembl"/>
</dbReference>
<dbReference type="GO" id="GO:0008630">
    <property type="term" value="P:intrinsic apoptotic signaling pathway in response to DNA damage"/>
    <property type="evidence" value="ECO:0000304"/>
    <property type="project" value="ProtInc"/>
</dbReference>
<dbReference type="GO" id="GO:0042771">
    <property type="term" value="P:intrinsic apoptotic signaling pathway in response to DNA damage by p53 class mediator"/>
    <property type="evidence" value="ECO:0000314"/>
    <property type="project" value="UniProtKB"/>
</dbReference>
<dbReference type="GO" id="GO:0001822">
    <property type="term" value="P:kidney development"/>
    <property type="evidence" value="ECO:0007669"/>
    <property type="project" value="Ensembl"/>
</dbReference>
<dbReference type="GO" id="GO:0006298">
    <property type="term" value="P:mismatch repair"/>
    <property type="evidence" value="ECO:0000304"/>
    <property type="project" value="ProtInc"/>
</dbReference>
<dbReference type="GO" id="GO:0060044">
    <property type="term" value="P:negative regulation of cardiac muscle cell proliferation"/>
    <property type="evidence" value="ECO:0000315"/>
    <property type="project" value="MGI"/>
</dbReference>
<dbReference type="GO" id="GO:0008285">
    <property type="term" value="P:negative regulation of cell population proliferation"/>
    <property type="evidence" value="ECO:0000315"/>
    <property type="project" value="AgBase"/>
</dbReference>
<dbReference type="GO" id="GO:0043524">
    <property type="term" value="P:negative regulation of neuron apoptotic process"/>
    <property type="evidence" value="ECO:0007669"/>
    <property type="project" value="Ensembl"/>
</dbReference>
<dbReference type="GO" id="GO:0045665">
    <property type="term" value="P:negative regulation of neuron differentiation"/>
    <property type="evidence" value="ECO:0007669"/>
    <property type="project" value="Ensembl"/>
</dbReference>
<dbReference type="GO" id="GO:0048666">
    <property type="term" value="P:neuron development"/>
    <property type="evidence" value="ECO:0007669"/>
    <property type="project" value="Ensembl"/>
</dbReference>
<dbReference type="GO" id="GO:0045793">
    <property type="term" value="P:positive regulation of cell size"/>
    <property type="evidence" value="ECO:0007669"/>
    <property type="project" value="Ensembl"/>
</dbReference>
<dbReference type="GO" id="GO:0045893">
    <property type="term" value="P:positive regulation of DNA-templated transcription"/>
    <property type="evidence" value="ECO:0000314"/>
    <property type="project" value="UniProtKB"/>
</dbReference>
<dbReference type="GO" id="GO:1902167">
    <property type="term" value="P:positive regulation of intrinsic apoptotic signaling pathway in response to DNA damage by p53 class mediator"/>
    <property type="evidence" value="ECO:0007669"/>
    <property type="project" value="Ensembl"/>
</dbReference>
<dbReference type="GO" id="GO:1901248">
    <property type="term" value="P:positive regulation of lung ciliated cell differentiation"/>
    <property type="evidence" value="ECO:0000315"/>
    <property type="project" value="UniProtKB"/>
</dbReference>
<dbReference type="GO" id="GO:0043410">
    <property type="term" value="P:positive regulation of MAPK cascade"/>
    <property type="evidence" value="ECO:0007669"/>
    <property type="project" value="Ensembl"/>
</dbReference>
<dbReference type="GO" id="GO:0048714">
    <property type="term" value="P:positive regulation of oligodendrocyte differentiation"/>
    <property type="evidence" value="ECO:0007669"/>
    <property type="project" value="Ensembl"/>
</dbReference>
<dbReference type="GO" id="GO:0045944">
    <property type="term" value="P:positive regulation of transcription by RNA polymerase II"/>
    <property type="evidence" value="ECO:0000314"/>
    <property type="project" value="UniProtKB"/>
</dbReference>
<dbReference type="GO" id="GO:0009791">
    <property type="term" value="P:post-embryonic development"/>
    <property type="evidence" value="ECO:0007669"/>
    <property type="project" value="Ensembl"/>
</dbReference>
<dbReference type="GO" id="GO:0051262">
    <property type="term" value="P:protein tetramerization"/>
    <property type="evidence" value="ECO:0007669"/>
    <property type="project" value="InterPro"/>
</dbReference>
<dbReference type="GO" id="GO:0051726">
    <property type="term" value="P:regulation of cell cycle"/>
    <property type="evidence" value="ECO:0000314"/>
    <property type="project" value="ParkinsonsUK-UCL"/>
</dbReference>
<dbReference type="GO" id="GO:0010468">
    <property type="term" value="P:regulation of gene expression"/>
    <property type="evidence" value="ECO:0000315"/>
    <property type="project" value="MGI"/>
</dbReference>
<dbReference type="GO" id="GO:0007346">
    <property type="term" value="P:regulation of mitotic cell cycle"/>
    <property type="evidence" value="ECO:0000315"/>
    <property type="project" value="MGI"/>
</dbReference>
<dbReference type="GO" id="GO:0006357">
    <property type="term" value="P:regulation of transcription by RNA polymerase II"/>
    <property type="evidence" value="ECO:0000318"/>
    <property type="project" value="GO_Central"/>
</dbReference>
<dbReference type="GO" id="GO:0001836">
    <property type="term" value="P:release of cytochrome c from mitochondria"/>
    <property type="evidence" value="ECO:0007669"/>
    <property type="project" value="Ensembl"/>
</dbReference>
<dbReference type="GO" id="GO:0009410">
    <property type="term" value="P:response to xenobiotic stimulus"/>
    <property type="evidence" value="ECO:0007669"/>
    <property type="project" value="Ensembl"/>
</dbReference>
<dbReference type="CDD" id="cd08367">
    <property type="entry name" value="P53"/>
    <property type="match status" value="1"/>
</dbReference>
<dbReference type="CDD" id="cd09571">
    <property type="entry name" value="SAM_tumor-p73"/>
    <property type="match status" value="1"/>
</dbReference>
<dbReference type="DisProt" id="DP00319"/>
<dbReference type="FunFam" id="2.60.40.720:FF:000002">
    <property type="entry name" value="Cellular tumor antigen p53"/>
    <property type="match status" value="1"/>
</dbReference>
<dbReference type="FunFam" id="1.10.150.50:FF:000020">
    <property type="entry name" value="Tumor protein 63 (p63)"/>
    <property type="match status" value="1"/>
</dbReference>
<dbReference type="Gene3D" id="2.60.40.720">
    <property type="match status" value="1"/>
</dbReference>
<dbReference type="Gene3D" id="4.10.170.10">
    <property type="entry name" value="p53-like tetramerisation domain"/>
    <property type="match status" value="1"/>
</dbReference>
<dbReference type="Gene3D" id="1.10.150.50">
    <property type="entry name" value="Transcription Factor, Ets-1"/>
    <property type="match status" value="1"/>
</dbReference>
<dbReference type="InterPro" id="IPR008967">
    <property type="entry name" value="p53-like_TF_DNA-bd_sf"/>
</dbReference>
<dbReference type="InterPro" id="IPR012346">
    <property type="entry name" value="p53/RUNT-type_TF_DNA-bd_sf"/>
</dbReference>
<dbReference type="InterPro" id="IPR011615">
    <property type="entry name" value="p53_DNA-bd"/>
</dbReference>
<dbReference type="InterPro" id="IPR036674">
    <property type="entry name" value="p53_tetramer_sf"/>
</dbReference>
<dbReference type="InterPro" id="IPR010991">
    <property type="entry name" value="p53_tetrameristn"/>
</dbReference>
<dbReference type="InterPro" id="IPR002117">
    <property type="entry name" value="p53_tumour_suppressor"/>
</dbReference>
<dbReference type="InterPro" id="IPR001660">
    <property type="entry name" value="SAM"/>
</dbReference>
<dbReference type="InterPro" id="IPR013761">
    <property type="entry name" value="SAM/pointed_sf"/>
</dbReference>
<dbReference type="InterPro" id="IPR037612">
    <property type="entry name" value="Tumour-p73_SAM"/>
</dbReference>
<dbReference type="PANTHER" id="PTHR11447">
    <property type="entry name" value="CELLULAR TUMOR ANTIGEN P53"/>
    <property type="match status" value="1"/>
</dbReference>
<dbReference type="PANTHER" id="PTHR11447:SF21">
    <property type="entry name" value="TUMOR PROTEIN P73"/>
    <property type="match status" value="1"/>
</dbReference>
<dbReference type="Pfam" id="PF00870">
    <property type="entry name" value="P53"/>
    <property type="match status" value="1"/>
</dbReference>
<dbReference type="Pfam" id="PF07710">
    <property type="entry name" value="P53_tetramer"/>
    <property type="match status" value="1"/>
</dbReference>
<dbReference type="Pfam" id="PF07647">
    <property type="entry name" value="SAM_2"/>
    <property type="match status" value="1"/>
</dbReference>
<dbReference type="PRINTS" id="PR00386">
    <property type="entry name" value="P53SUPPRESSR"/>
</dbReference>
<dbReference type="SMART" id="SM00454">
    <property type="entry name" value="SAM"/>
    <property type="match status" value="1"/>
</dbReference>
<dbReference type="SUPFAM" id="SSF47719">
    <property type="entry name" value="p53 tetramerization domain"/>
    <property type="match status" value="1"/>
</dbReference>
<dbReference type="SUPFAM" id="SSF49417">
    <property type="entry name" value="p53-like transcription factors"/>
    <property type="match status" value="1"/>
</dbReference>
<dbReference type="SUPFAM" id="SSF47769">
    <property type="entry name" value="SAM/Pointed domain"/>
    <property type="match status" value="1"/>
</dbReference>
<dbReference type="PROSITE" id="PS00348">
    <property type="entry name" value="P53"/>
    <property type="match status" value="1"/>
</dbReference>